<reference key="1">
    <citation type="journal article" date="1994" name="J. Cell Biol.">
        <title>Human laminin M chain (merosin): complete primary structure, chromosomal assignment, and expression of the M and A chain in human fetal tissues.</title>
        <authorList>
            <person name="Vuolteenaho R."/>
            <person name="Nissinen M."/>
            <person name="Sainio K."/>
            <person name="Byers M."/>
            <person name="Eddy R."/>
            <person name="Hirvonen H."/>
            <person name="Shows T.B."/>
            <person name="Sariola H."/>
            <person name="Engvall E."/>
            <person name="Tryggvason K."/>
        </authorList>
    </citation>
    <scope>NUCLEOTIDE SEQUENCE [MRNA]</scope>
    <scope>VARIANT VAL-2587</scope>
    <source>
        <tissue>Placenta</tissue>
    </source>
</reference>
<reference key="2">
    <citation type="journal article" date="1996" name="J. Biol. Chem.">
        <title>Structure of the human laminin alpha2-chain gene (LAMA2), which is affected in congenital muscular dystrophy.</title>
        <authorList>
            <person name="Zhang X."/>
            <person name="Vuolteenaho R."/>
            <person name="Tryggvason K."/>
        </authorList>
    </citation>
    <scope>NUCLEOTIDE SEQUENCE [GENOMIC DNA]</scope>
    <scope>VARIANT VAL-2587</scope>
</reference>
<reference key="3">
    <citation type="journal article" date="2003" name="Nature">
        <title>The DNA sequence and analysis of human chromosome 6.</title>
        <authorList>
            <person name="Mungall A.J."/>
            <person name="Palmer S.A."/>
            <person name="Sims S.K."/>
            <person name="Edwards C.A."/>
            <person name="Ashurst J.L."/>
            <person name="Wilming L."/>
            <person name="Jones M.C."/>
            <person name="Horton R."/>
            <person name="Hunt S.E."/>
            <person name="Scott C.E."/>
            <person name="Gilbert J.G.R."/>
            <person name="Clamp M.E."/>
            <person name="Bethel G."/>
            <person name="Milne S."/>
            <person name="Ainscough R."/>
            <person name="Almeida J.P."/>
            <person name="Ambrose K.D."/>
            <person name="Andrews T.D."/>
            <person name="Ashwell R.I.S."/>
            <person name="Babbage A.K."/>
            <person name="Bagguley C.L."/>
            <person name="Bailey J."/>
            <person name="Banerjee R."/>
            <person name="Barker D.J."/>
            <person name="Barlow K.F."/>
            <person name="Bates K."/>
            <person name="Beare D.M."/>
            <person name="Beasley H."/>
            <person name="Beasley O."/>
            <person name="Bird C.P."/>
            <person name="Blakey S.E."/>
            <person name="Bray-Allen S."/>
            <person name="Brook J."/>
            <person name="Brown A.J."/>
            <person name="Brown J.Y."/>
            <person name="Burford D.C."/>
            <person name="Burrill W."/>
            <person name="Burton J."/>
            <person name="Carder C."/>
            <person name="Carter N.P."/>
            <person name="Chapman J.C."/>
            <person name="Clark S.Y."/>
            <person name="Clark G."/>
            <person name="Clee C.M."/>
            <person name="Clegg S."/>
            <person name="Cobley V."/>
            <person name="Collier R.E."/>
            <person name="Collins J.E."/>
            <person name="Colman L.K."/>
            <person name="Corby N.R."/>
            <person name="Coville G.J."/>
            <person name="Culley K.M."/>
            <person name="Dhami P."/>
            <person name="Davies J."/>
            <person name="Dunn M."/>
            <person name="Earthrowl M.E."/>
            <person name="Ellington A.E."/>
            <person name="Evans K.A."/>
            <person name="Faulkner L."/>
            <person name="Francis M.D."/>
            <person name="Frankish A."/>
            <person name="Frankland J."/>
            <person name="French L."/>
            <person name="Garner P."/>
            <person name="Garnett J."/>
            <person name="Ghori M.J."/>
            <person name="Gilby L.M."/>
            <person name="Gillson C.J."/>
            <person name="Glithero R.J."/>
            <person name="Grafham D.V."/>
            <person name="Grant M."/>
            <person name="Gribble S."/>
            <person name="Griffiths C."/>
            <person name="Griffiths M.N.D."/>
            <person name="Hall R."/>
            <person name="Halls K.S."/>
            <person name="Hammond S."/>
            <person name="Harley J.L."/>
            <person name="Hart E.A."/>
            <person name="Heath P.D."/>
            <person name="Heathcott R."/>
            <person name="Holmes S.J."/>
            <person name="Howden P.J."/>
            <person name="Howe K.L."/>
            <person name="Howell G.R."/>
            <person name="Huckle E."/>
            <person name="Humphray S.J."/>
            <person name="Humphries M.D."/>
            <person name="Hunt A.R."/>
            <person name="Johnson C.M."/>
            <person name="Joy A.A."/>
            <person name="Kay M."/>
            <person name="Keenan S.J."/>
            <person name="Kimberley A.M."/>
            <person name="King A."/>
            <person name="Laird G.K."/>
            <person name="Langford C."/>
            <person name="Lawlor S."/>
            <person name="Leongamornlert D.A."/>
            <person name="Leversha M."/>
            <person name="Lloyd C.R."/>
            <person name="Lloyd D.M."/>
            <person name="Loveland J.E."/>
            <person name="Lovell J."/>
            <person name="Martin S."/>
            <person name="Mashreghi-Mohammadi M."/>
            <person name="Maslen G.L."/>
            <person name="Matthews L."/>
            <person name="McCann O.T."/>
            <person name="McLaren S.J."/>
            <person name="McLay K."/>
            <person name="McMurray A."/>
            <person name="Moore M.J.F."/>
            <person name="Mullikin J.C."/>
            <person name="Niblett D."/>
            <person name="Nickerson T."/>
            <person name="Novik K.L."/>
            <person name="Oliver K."/>
            <person name="Overton-Larty E.K."/>
            <person name="Parker A."/>
            <person name="Patel R."/>
            <person name="Pearce A.V."/>
            <person name="Peck A.I."/>
            <person name="Phillimore B.J.C.T."/>
            <person name="Phillips S."/>
            <person name="Plumb R.W."/>
            <person name="Porter K.M."/>
            <person name="Ramsey Y."/>
            <person name="Ranby S.A."/>
            <person name="Rice C.M."/>
            <person name="Ross M.T."/>
            <person name="Searle S.M."/>
            <person name="Sehra H.K."/>
            <person name="Sheridan E."/>
            <person name="Skuce C.D."/>
            <person name="Smith S."/>
            <person name="Smith M."/>
            <person name="Spraggon L."/>
            <person name="Squares S.L."/>
            <person name="Steward C.A."/>
            <person name="Sycamore N."/>
            <person name="Tamlyn-Hall G."/>
            <person name="Tester J."/>
            <person name="Theaker A.J."/>
            <person name="Thomas D.W."/>
            <person name="Thorpe A."/>
            <person name="Tracey A."/>
            <person name="Tromans A."/>
            <person name="Tubby B."/>
            <person name="Wall M."/>
            <person name="Wallis J.M."/>
            <person name="West A.P."/>
            <person name="White S.S."/>
            <person name="Whitehead S.L."/>
            <person name="Whittaker H."/>
            <person name="Wild A."/>
            <person name="Willey D.J."/>
            <person name="Wilmer T.E."/>
            <person name="Wood J.M."/>
            <person name="Wray P.W."/>
            <person name="Wyatt J.C."/>
            <person name="Young L."/>
            <person name="Younger R.M."/>
            <person name="Bentley D.R."/>
            <person name="Coulson A."/>
            <person name="Durbin R.M."/>
            <person name="Hubbard T."/>
            <person name="Sulston J.E."/>
            <person name="Dunham I."/>
            <person name="Rogers J."/>
            <person name="Beck S."/>
        </authorList>
    </citation>
    <scope>NUCLEOTIDE SEQUENCE [LARGE SCALE GENOMIC DNA]</scope>
</reference>
<reference key="4">
    <citation type="journal article" date="1994" name="J. Biochem.">
        <title>Human laminin M chain: epitope analysis of its monoclonal antibodies by immunoscreening of cDNA clones and tissue expression.</title>
        <authorList>
            <person name="Hori H."/>
            <person name="Kanamori T."/>
            <person name="Mizuta T."/>
            <person name="Yamaguchi N."/>
            <person name="Liu Y."/>
            <person name="Nagai Y."/>
        </authorList>
    </citation>
    <scope>NUCLEOTIDE SEQUENCE [MRNA] OF 1360-3122</scope>
</reference>
<reference key="5">
    <citation type="journal article" date="1990" name="Proc. Natl. Acad. Sci. U.S.A.">
        <title>Merosin, a tissue-specific basement membrane protein, is a laminin-like protein.</title>
        <authorList>
            <person name="Ehrig K."/>
            <person name="Leivo I."/>
            <person name="Argraves W.S."/>
            <person name="Ruoslahti E."/>
            <person name="Engvall E."/>
        </authorList>
    </citation>
    <scope>NUCLEOTIDE SEQUENCE [MRNA] OF 1981-3122</scope>
    <scope>PARTIAL PROTEIN SEQUENCE</scope>
    <scope>VARIANT VAL-2587</scope>
    <source>
        <tissue>Placenta</tissue>
    </source>
</reference>
<reference key="6">
    <citation type="journal article" date="2005" name="J. Proteome Res.">
        <title>Human plasma N-glycoproteome analysis by immunoaffinity subtraction, hydrazide chemistry, and mass spectrometry.</title>
        <authorList>
            <person name="Liu T."/>
            <person name="Qian W.-J."/>
            <person name="Gritsenko M.A."/>
            <person name="Camp D.G. II"/>
            <person name="Monroe M.E."/>
            <person name="Moore R.J."/>
            <person name="Smith R.D."/>
        </authorList>
    </citation>
    <scope>GLYCOSYLATION [LARGE SCALE ANALYSIS] AT ASN-363</scope>
    <source>
        <tissue>Plasma</tissue>
    </source>
</reference>
<reference key="7">
    <citation type="journal article" date="2009" name="J. Proteome Res.">
        <title>Glycoproteomics analysis of human liver tissue by combination of multiple enzyme digestion and hydrazide chemistry.</title>
        <authorList>
            <person name="Chen R."/>
            <person name="Jiang X."/>
            <person name="Sun D."/>
            <person name="Han G."/>
            <person name="Wang F."/>
            <person name="Ye M."/>
            <person name="Wang L."/>
            <person name="Zou H."/>
        </authorList>
    </citation>
    <scope>GLYCOSYLATION [LARGE SCALE ANALYSIS] AT ASN-1901; ASN-1916; ASN-1920; ASN-2017 AND ASN-2648</scope>
    <source>
        <tissue>Liver</tissue>
    </source>
</reference>
<reference key="8">
    <citation type="journal article" date="2011" name="Muscle Nerve">
        <title>Clinical and molecular characterization of limb-girdle muscular dystrophy due to LAMA2 mutations.</title>
        <authorList>
            <person name="Gavassini B.F."/>
            <person name="Carboni N."/>
            <person name="Nielsen J.E."/>
            <person name="Danielsen E.R."/>
            <person name="Thomsen C."/>
            <person name="Svenstrup K."/>
            <person name="Bello L."/>
            <person name="Maioli M.A."/>
            <person name="Marrosu G."/>
            <person name="Ticca A.F."/>
            <person name="Mura M."/>
            <person name="Marrosu M.G."/>
            <person name="Soraru G."/>
            <person name="Angelini C."/>
            <person name="Vissing J."/>
            <person name="Pegoraro E."/>
        </authorList>
    </citation>
    <scope>INVOLVEMENT IN LGMDR23</scope>
    <scope>VARIANTS LGMDR23 GLY-152; PRO-243; ARG-284 AND SER-2477</scope>
</reference>
<reference key="9">
    <citation type="journal article" date="2014" name="Neuromuscul. Disord.">
        <title>Limb girdle muscular dystrophy due to LAMA2 mutations: diagnostic difficulties due to associated peripheral neuropathy.</title>
        <authorList>
            <person name="Chan S.H."/>
            <person name="Foley A.R."/>
            <person name="Phadke R."/>
            <person name="Mathew A.A."/>
            <person name="Pitt M."/>
            <person name="Sewry C."/>
            <person name="Muntoni F."/>
        </authorList>
    </citation>
    <scope>INVOLVEMENT IN LGMDR23</scope>
    <scope>VARIANTS LGMDR23 131-GLN--ASN-3122 DEL AND VAL-1496</scope>
    <scope>VARIANT SER-199</scope>
</reference>
<reference key="10">
    <citation type="journal article" date="2015" name="Clin. Genet.">
        <title>Genotype/phenotype analysis in Chinese laminin-alpha2 deficient congenital muscular dystrophy patients.</title>
        <authorList>
            <person name="Xiong H."/>
            <person name="Tan D."/>
            <person name="Wang S."/>
            <person name="Song S."/>
            <person name="Yang H."/>
            <person name="Gao K."/>
            <person name="Liu A."/>
            <person name="Jiao H."/>
            <person name="Mao B."/>
            <person name="Ding J."/>
            <person name="Chang X."/>
            <person name="Wang J."/>
            <person name="Wu Y."/>
            <person name="Yuan Y."/>
            <person name="Jiang Y."/>
            <person name="Zhang F."/>
            <person name="Wu H."/>
            <person name="Wu X."/>
        </authorList>
    </citation>
    <scope>INVOLVEMENT IN MDC1A</scope>
    <scope>VARIANTS MDC1A 95-GLN--ASN-3122 DEL; 110-TRP--ASN-3122 DEL; 121-TYR--ASN-3122 DEL; 273-ARG--ASN-3122 DEL; 435-ARG--ASN-3122 DEL; TYR-518; 659-SER--ASN-3122 DEL; 744-ARG--ASN-3122 DEL; MET-821; 986-TRP--ASN-3122 DEL; 1032-CYS--ASN-3122 DEL; 1095-ARG--ASN-3122 DEL; GLY-1311; 1319-ARG--ASN-3122 DEL; 1350-ARG--ASN-3122 DEL; 1826-ARG--ASN-3122 DEL; VAL-2172 DEL; 2383-ARG--ASN-3122 DEL; 2578-ARG--ASN-3122 DEL; 2604-ARG--ASN-3122 DEL; ALA-2633; 2641-GLU--ASN-3122 DEL AND 2755-SER--ASN-3122 DEL</scope>
</reference>
<reference key="11">
    <citation type="journal article" date="1999" name="Hum. Mutat.">
        <title>Novel single base polymorphisms and rare sequence variants in the laminin 2-chain coding region detected by RNA/SSCP analysis.</title>
        <authorList>
            <person name="Panicker S.G."/>
            <person name="Mendell J.T."/>
            <person name="Chen L."/>
            <person name="Feng B."/>
            <person name="Sahenk Z."/>
            <person name="Marzluf G.A."/>
            <person name="Amato A.A."/>
            <person name="Mendell J.R."/>
        </authorList>
    </citation>
    <scope>VARIANTS GLN-545; HIS-619; LEU-919; HIS-2586 AND LYS-2614</scope>
</reference>
<reference key="12">
    <citation type="journal article" date="2001" name="Neurology">
        <title>Congenital muscular dystrophy with primary partial laminin alpha-2 chain deficiency: molecular study.</title>
        <authorList>
            <person name="He Y."/>
            <person name="Jones K.J."/>
            <person name="Vignier N."/>
            <person name="Morgan G."/>
            <person name="Chevallay M."/>
            <person name="Barois A."/>
            <person name="Estournet-Mathiaud B."/>
            <person name="Hori H."/>
            <person name="Mizuta T."/>
            <person name="Tome F.M.S."/>
            <person name="North K.N."/>
            <person name="Guicheney P."/>
        </authorList>
    </citation>
    <scope>VARIANT MDC1A PRO-2564</scope>
</reference>
<reference key="13">
    <citation type="journal article" date="2003" name="Hum. Mutat.">
        <title>Clinical and molecular study in congenital muscular dystrophy with partial laminin alpha-2 (LAMA2) deficiency.</title>
        <authorList>
            <person name="Tezak Z."/>
            <person name="Prandini P."/>
            <person name="Boscaro M."/>
            <person name="Marin A."/>
            <person name="Devaney J."/>
            <person name="Marino M."/>
            <person name="Fanin M."/>
            <person name="Trevisan C.P."/>
            <person name="Park J."/>
            <person name="Tyson W."/>
            <person name="Finkel R."/>
            <person name="Garcia C."/>
            <person name="Angelini C."/>
            <person name="Hoffman E.P."/>
            <person name="Pegoraro E."/>
        </authorList>
    </citation>
    <scope>VARIANTS MDC1A TYR-527 AND ARG-862</scope>
</reference>
<reference key="14">
    <citation type="journal article" date="2006" name="Science">
        <title>The consensus coding sequences of human breast and colorectal cancers.</title>
        <authorList>
            <person name="Sjoeblom T."/>
            <person name="Jones S."/>
            <person name="Wood L.D."/>
            <person name="Parsons D.W."/>
            <person name="Lin J."/>
            <person name="Barber T.D."/>
            <person name="Mandelker D."/>
            <person name="Leary R.J."/>
            <person name="Ptak J."/>
            <person name="Silliman N."/>
            <person name="Szabo S."/>
            <person name="Buckhaults P."/>
            <person name="Farrell C."/>
            <person name="Meeh P."/>
            <person name="Markowitz S.D."/>
            <person name="Willis J."/>
            <person name="Dawson D."/>
            <person name="Willson J.K.V."/>
            <person name="Gazdar A.F."/>
            <person name="Hartigan J."/>
            <person name="Wu L."/>
            <person name="Liu C."/>
            <person name="Parmigiani G."/>
            <person name="Park B.H."/>
            <person name="Bachman K.E."/>
            <person name="Papadopoulos N."/>
            <person name="Vogelstein B."/>
            <person name="Kinzler K.W."/>
            <person name="Velculescu V.E."/>
        </authorList>
    </citation>
    <scope>VARIANT [LARGE SCALE ANALYSIS] ALA-1160</scope>
</reference>
<reference key="15">
    <citation type="journal article" date="2017" name="Clin. Genet.">
        <title>Improved diagnostic yield of neuromuscular disorders applying clinical exome sequencing in patients arising from a consanguineous population.</title>
        <authorList>
            <person name="Fattahi Z."/>
            <person name="Kalhor Z."/>
            <person name="Fadaee M."/>
            <person name="Vazehan R."/>
            <person name="Parsimehr E."/>
            <person name="Abolhassani A."/>
            <person name="Beheshtian M."/>
            <person name="Zamani G."/>
            <person name="Nafissi S."/>
            <person name="Nilipour Y."/>
            <person name="Akbari M.R."/>
            <person name="Kahrizi K."/>
            <person name="Kariminejad A."/>
            <person name="Najmabadi H."/>
        </authorList>
    </citation>
    <scope>VARIANT MDC1A ARG-2889</scope>
</reference>
<gene>
    <name type="primary">LAMA2</name>
    <name type="synonym">LAMM</name>
</gene>
<keyword id="KW-0002">3D-structure</keyword>
<keyword id="KW-0084">Basement membrane</keyword>
<keyword id="KW-0130">Cell adhesion</keyword>
<keyword id="KW-0175">Coiled coil</keyword>
<keyword id="KW-0912">Congenital muscular dystrophy</keyword>
<keyword id="KW-0903">Direct protein sequencing</keyword>
<keyword id="KW-0225">Disease variant</keyword>
<keyword id="KW-1015">Disulfide bond</keyword>
<keyword id="KW-0272">Extracellular matrix</keyword>
<keyword id="KW-0325">Glycoprotein</keyword>
<keyword id="KW-0424">Laminin EGF-like domain</keyword>
<keyword id="KW-0947">Limb-girdle muscular dystrophy</keyword>
<keyword id="KW-1267">Proteomics identification</keyword>
<keyword id="KW-1185">Reference proteome</keyword>
<keyword id="KW-0677">Repeat</keyword>
<keyword id="KW-0964">Secreted</keyword>
<keyword id="KW-0732">Signal</keyword>
<evidence type="ECO:0000250" key="1"/>
<evidence type="ECO:0000255" key="2"/>
<evidence type="ECO:0000255" key="3">
    <source>
        <dbReference type="PROSITE-ProRule" id="PRU00122"/>
    </source>
</evidence>
<evidence type="ECO:0000255" key="4">
    <source>
        <dbReference type="PROSITE-ProRule" id="PRU00458"/>
    </source>
</evidence>
<evidence type="ECO:0000255" key="5">
    <source>
        <dbReference type="PROSITE-ProRule" id="PRU00460"/>
    </source>
</evidence>
<evidence type="ECO:0000255" key="6">
    <source>
        <dbReference type="PROSITE-ProRule" id="PRU00466"/>
    </source>
</evidence>
<evidence type="ECO:0000256" key="7">
    <source>
        <dbReference type="SAM" id="MobiDB-lite"/>
    </source>
</evidence>
<evidence type="ECO:0000269" key="8">
    <source>
    </source>
</evidence>
<evidence type="ECO:0000269" key="9">
    <source>
    </source>
</evidence>
<evidence type="ECO:0000269" key="10">
    <source>
    </source>
</evidence>
<evidence type="ECO:0000269" key="11">
    <source>
    </source>
</evidence>
<evidence type="ECO:0000269" key="12">
    <source>
    </source>
</evidence>
<evidence type="ECO:0000269" key="13">
    <source>
    </source>
</evidence>
<evidence type="ECO:0000269" key="14">
    <source>
    </source>
</evidence>
<evidence type="ECO:0000269" key="15">
    <source>
    </source>
</evidence>
<evidence type="ECO:0000269" key="16">
    <source>
    </source>
</evidence>
<evidence type="ECO:0000269" key="17">
    <source>
    </source>
</evidence>
<evidence type="ECO:0000269" key="18">
    <source>
    </source>
</evidence>
<evidence type="ECO:0000269" key="19">
    <source>
    </source>
</evidence>
<evidence type="ECO:0000269" key="20">
    <source ref="11"/>
</evidence>
<evidence type="ECO:0000305" key="21"/>
<evidence type="ECO:0007829" key="22">
    <source>
        <dbReference type="PDB" id="4YEP"/>
    </source>
</evidence>
<evidence type="ECO:0007829" key="23">
    <source>
        <dbReference type="PDB" id="4YEQ"/>
    </source>
</evidence>
<sequence length="3122" mass="343905">MPGAAGVLLLLLLSGGLGGVQAQRPQQQRQSQAHQQRGLFPAVLNLASNALITTNATCGEKGPEMYCKLVEHVPGQPVRNPQCRICNQNSSNPNQRHPITNAIDGKNTWWQSPSIKNGIEYHYVTITLDLQQVFQIAYVIVKAANSPRPGNWILERSLDDVEYKPWQYHAVTDTECLTLYNIYPRTGPPSYAKDDEVICTSFYSKIHPLENGEIHISLINGRPSADDPSPELLEFTSARYIRLRFQRIRTLNADLMMFAHKDPREIDPIVTRRYYYSVKDISVGGMCICYGHARACPLDPATNKSRCECEHNTCGDSCDQCCPGFHQKPWRAGTFLTKTECEACNCHGKAEECYYDENVARRNLSLNIRGKYIGGGVCINCTQNTAGINCETCTDGFFRPKGVSPNYPRPCQPCHCDPIGSLNEVCVKDEKHARRGLAPGSCHCKTGFGGVSCDRCARGYTGYPDCKACNCSGLGSKNEDPCFGPCICKENVEGGDCSRCKSGFFNLQEDNWKGCDECFCSGVSNRCQSSYWTYGKIQDMSGWYLTDLPGRIRVAPQQDDLDSPQQISISNAEARQALPHSYYWSAPAPYLGNKLPAVGGQLTFTISYDLEEEEEDTERVLQLMIILEGNDLSISTAQDEVYLHPSEEHTNVLLLKEESFTIHGTHFPVRRKEFMTVLANLKRVLLQITYSFGMDAIFRLSSVNLESAVSYPTDGSIAAAVEVCQCPPGYTGSSCESCWPRHRRVNGTIFGGICEPCQCFGHAESCDDVTGECLNCKDHTGGPYCDKCLPGFYGEPTKGTSEDCQPCACPLNIPSNNFSPTCHLDRSLGLICDGCPVGYTGPRCERCAEGYFGQPSVPGGSCQPCQCNDNLDFSIPGSCDSLSGSCLICKPGTTGRYCELCADGYFGDAVDAKNCQPCRCNAGGSFSEVCHSQTGQCECRANVQGQRCDKCKAGTFGLQSARGCVPCNCNSFGSKSFDCEESGQCWCQPGVTGKKCDRCAHGYFNFQEGGCTACECSHLGNNCDPKTGRCICPPNTIGEKCSKCAPNTWGHSITTGCKACNCSTVGSLDFQCNVNTGQCNCHPKFSGAKCTECSRGHWNYPRCNLCDCFLPGTDATTCDSETKKCSCSDQTGQCTCKVNVEGIHCDRCRPGKFGLDAKNPLGCSSCYCFGTTTQCSEAKGLIRTWVTLKAEQTILPLVDEALQHTTTKGIVFQHPEIVAHMDLMREDLHLEPFYWKLPEQFEGKKLMAYGGKLKYAIYFEAREETGFSTYNPQVIIRGGTPTHARIIVRHMAAPLIGQLTRHEIEMTEKEWKYYGDDPRVHRTVTREDFLDILYDIHYILIKATYGNFMRQSRISEISMEVAEQGRGTTMTPPADLIEKCDCPLGYSGLSCEACLPGFYRLRSQPGGRTPGPTLGTCVPCQCNGHSSLCDPETSICQNCQHHTAGDFCERCALGYYGIVKGLPNDCQQCACPLISSSNNFSPSCVAEGLDDYRCTACPRGYEGQYCERCAPGYTGSPGNPGGSCQECECDPYGSLPVPCDPVTGFCTCRPGATGRKCDGCKHWHAREGWECVFCGDECTGLLLGDLARLEQMVMSINLTGPLPAPYKMLYGLENMTQELKHLLSPQRAPERLIQLAEGNLNTLVTEMNELLTRATKVTADGEQTGQDAERTNTRAKSLGEFIKELARDAEAVNEKAIKLNETLGTRDEAFERNLEGLQKEIDQMIKELRRKNLETQKEIAEDELVAAEALLKKVKKLFGESRGENEEMEKDLREKLADYKNKVDDAWDLLREATDKIREANRLFAVNQKNMTALEKKKEAVESGKRQIENTLKEGNDILDEANRLADEINSIIDYVEDIQTKLPPMSEELNDKIDDLSQEIKDRKLAEKVSQAESHAAQLNDSSAVLDGILDEAKNISFNATAAFKAYSNIKDYIDEAEKVAKEAKDLAHEATKLATGPRGLLKEDAKGCLQKSFRILNEAKKLANDVKENEDHLNGLKTRIENADARNGDLLRTLNDTLGKLSAIPNDTAAKLQAVKDKARQANDTAKDVLAQITELHQNLDGLKKNYNKLADSVAKTNAVVKDPSKNKIIADADATVKNLEQEADRLIDKLKPIKELEDNLKKNISEIKELINQARKQANSIKVSVSSGGDCIRTYKPEIKKGSYNNIVVNVKTAVADNLLFYLGSAKFIDFLAIEMRKGKVSFLWDVGSGVGRVEYPDLTIDDSYWYRIVASRTGRNGTISVRALDGPKASIVPSTHHSTSPPGYTILDVDANAMLFVGGLTGKLKKADAVRVITFTGCMGETYFDNKPIGLWNFREKEGDCKGCTVSPQVEDSEGTIQFDGEGYALVSRPIRWYPNISTVMFKFRTFSSSALLMYLATRDLRDFMSVELTDGHIKVSYDLGSGMASVVSNQNHNDGKWKSFTLSRIQKQANISIVDIDTNQEENIATSSSGNNFGLDLKADDKIYFGGLPTLRNLSMKARPEVNLKKYSGCLKDIEISRTPYNILSSPDYVGVTKGCSLENVYTVSFPKPGFVELSPVPIDVGTEINLSFSTKNESGIILLGSGGTPAPPRRKRRQTGQAYYAILLNRGRLEVHLSTGARTMRKIVIRPEPNLFHDGREHSVHVERTRGIFTVQVDENRRYMQNLTVEQPIEVKKLFVGGAPPEFQPSPLRNIPPFEGCIWNLVINSVPMDFARPVSFKNADIGRCAHQKLREDEDGAAPAEIVIQPEPVPTPAFPTPTPVLTHGPCAAESEPALLIGSKQFGLSRNSHIAIAFDDTKVKNRLTIELEVRTEAESGLLFYMARINHADFATVQLRNGLPYFSYDLGSGDTHTMIPTKINDGQWHKIKIMRSKQEGILYVDGASNRTISPKKADILDVVGMLYVGGLPINYTTRRIGPVTYSIDGCVRNLHMAEAPADLEQPTSSFHVGTCFANAQRGTYFDGTGFAKAVGGFKVGLDLLVEFEFRTTTTTGVLLGISSQKMDGMGIEMIDEKLMFHVDNGAGRFTAVYDAGVPGHLCDGQWHKVTANKIKHRIELTVDGNQVEAQSPNPASTSADTNDPVFVGGFPDDLKQFGLTTSIPFRGCIRSLKLTKGTGKPLEVNFAKALELRGVQPVSCPAN</sequence>
<dbReference type="EMBL" id="Z26653">
    <property type="protein sequence ID" value="CAA81394.1"/>
    <property type="status" value="ALT_FRAME"/>
    <property type="molecule type" value="mRNA"/>
</dbReference>
<dbReference type="EMBL" id="U66796">
    <property type="protein sequence ID" value="AAB18388.1"/>
    <property type="status" value="ALT_SEQ"/>
    <property type="molecule type" value="Genomic_DNA"/>
</dbReference>
<dbReference type="EMBL" id="U66733">
    <property type="protein sequence ID" value="AAB18388.1"/>
    <property type="status" value="JOINED"/>
    <property type="molecule type" value="Genomic_DNA"/>
</dbReference>
<dbReference type="EMBL" id="U66734">
    <property type="protein sequence ID" value="AAB18388.1"/>
    <property type="status" value="JOINED"/>
    <property type="molecule type" value="Genomic_DNA"/>
</dbReference>
<dbReference type="EMBL" id="U66735">
    <property type="protein sequence ID" value="AAB18388.1"/>
    <property type="status" value="JOINED"/>
    <property type="molecule type" value="Genomic_DNA"/>
</dbReference>
<dbReference type="EMBL" id="U66736">
    <property type="protein sequence ID" value="AAB18388.1"/>
    <property type="status" value="JOINED"/>
    <property type="molecule type" value="Genomic_DNA"/>
</dbReference>
<dbReference type="EMBL" id="U66737">
    <property type="protein sequence ID" value="AAB18388.1"/>
    <property type="status" value="JOINED"/>
    <property type="molecule type" value="Genomic_DNA"/>
</dbReference>
<dbReference type="EMBL" id="U66738">
    <property type="protein sequence ID" value="AAB18388.1"/>
    <property type="status" value="JOINED"/>
    <property type="molecule type" value="Genomic_DNA"/>
</dbReference>
<dbReference type="EMBL" id="U66739">
    <property type="protein sequence ID" value="AAB18388.1"/>
    <property type="status" value="JOINED"/>
    <property type="molecule type" value="Genomic_DNA"/>
</dbReference>
<dbReference type="EMBL" id="U66740">
    <property type="protein sequence ID" value="AAB18388.1"/>
    <property type="status" value="JOINED"/>
    <property type="molecule type" value="Genomic_DNA"/>
</dbReference>
<dbReference type="EMBL" id="U66741">
    <property type="protein sequence ID" value="AAB18388.1"/>
    <property type="status" value="JOINED"/>
    <property type="molecule type" value="Genomic_DNA"/>
</dbReference>
<dbReference type="EMBL" id="U66742">
    <property type="protein sequence ID" value="AAB18388.1"/>
    <property type="status" value="JOINED"/>
    <property type="molecule type" value="Genomic_DNA"/>
</dbReference>
<dbReference type="EMBL" id="U66743">
    <property type="protein sequence ID" value="AAB18388.1"/>
    <property type="status" value="JOINED"/>
    <property type="molecule type" value="Genomic_DNA"/>
</dbReference>
<dbReference type="EMBL" id="U66745">
    <property type="protein sequence ID" value="AAB18388.1"/>
    <property type="status" value="JOINED"/>
    <property type="molecule type" value="Genomic_DNA"/>
</dbReference>
<dbReference type="EMBL" id="U66746">
    <property type="protein sequence ID" value="AAB18388.1"/>
    <property type="status" value="JOINED"/>
    <property type="molecule type" value="Genomic_DNA"/>
</dbReference>
<dbReference type="EMBL" id="U66747">
    <property type="protein sequence ID" value="AAB18388.1"/>
    <property type="status" value="JOINED"/>
    <property type="molecule type" value="Genomic_DNA"/>
</dbReference>
<dbReference type="EMBL" id="U66748">
    <property type="protein sequence ID" value="AAB18388.1"/>
    <property type="status" value="JOINED"/>
    <property type="molecule type" value="Genomic_DNA"/>
</dbReference>
<dbReference type="EMBL" id="U66749">
    <property type="protein sequence ID" value="AAB18388.1"/>
    <property type="status" value="JOINED"/>
    <property type="molecule type" value="Genomic_DNA"/>
</dbReference>
<dbReference type="EMBL" id="U66750">
    <property type="protein sequence ID" value="AAB18388.1"/>
    <property type="status" value="JOINED"/>
    <property type="molecule type" value="Genomic_DNA"/>
</dbReference>
<dbReference type="EMBL" id="U66751">
    <property type="protein sequence ID" value="AAB18388.1"/>
    <property type="status" value="JOINED"/>
    <property type="molecule type" value="Genomic_DNA"/>
</dbReference>
<dbReference type="EMBL" id="U66752">
    <property type="protein sequence ID" value="AAB18388.1"/>
    <property type="status" value="JOINED"/>
    <property type="molecule type" value="Genomic_DNA"/>
</dbReference>
<dbReference type="EMBL" id="U66753">
    <property type="protein sequence ID" value="AAB18388.1"/>
    <property type="status" value="JOINED"/>
    <property type="molecule type" value="Genomic_DNA"/>
</dbReference>
<dbReference type="EMBL" id="U66754">
    <property type="protein sequence ID" value="AAB18388.1"/>
    <property type="status" value="JOINED"/>
    <property type="molecule type" value="Genomic_DNA"/>
</dbReference>
<dbReference type="EMBL" id="U66755">
    <property type="protein sequence ID" value="AAB18388.1"/>
    <property type="status" value="JOINED"/>
    <property type="molecule type" value="Genomic_DNA"/>
</dbReference>
<dbReference type="EMBL" id="U66756">
    <property type="protein sequence ID" value="AAB18388.1"/>
    <property type="status" value="JOINED"/>
    <property type="molecule type" value="Genomic_DNA"/>
</dbReference>
<dbReference type="EMBL" id="U66757">
    <property type="protein sequence ID" value="AAB18388.1"/>
    <property type="status" value="JOINED"/>
    <property type="molecule type" value="Genomic_DNA"/>
</dbReference>
<dbReference type="EMBL" id="U66758">
    <property type="protein sequence ID" value="AAB18388.1"/>
    <property type="status" value="JOINED"/>
    <property type="molecule type" value="Genomic_DNA"/>
</dbReference>
<dbReference type="EMBL" id="U66759">
    <property type="protein sequence ID" value="AAB18388.1"/>
    <property type="status" value="JOINED"/>
    <property type="molecule type" value="Genomic_DNA"/>
</dbReference>
<dbReference type="EMBL" id="U66760">
    <property type="protein sequence ID" value="AAB18388.1"/>
    <property type="status" value="JOINED"/>
    <property type="molecule type" value="Genomic_DNA"/>
</dbReference>
<dbReference type="EMBL" id="U66761">
    <property type="protein sequence ID" value="AAB18388.1"/>
    <property type="status" value="JOINED"/>
    <property type="molecule type" value="Genomic_DNA"/>
</dbReference>
<dbReference type="EMBL" id="U66762">
    <property type="protein sequence ID" value="AAB18388.1"/>
    <property type="status" value="JOINED"/>
    <property type="molecule type" value="Genomic_DNA"/>
</dbReference>
<dbReference type="EMBL" id="U66763">
    <property type="protein sequence ID" value="AAB18388.1"/>
    <property type="status" value="JOINED"/>
    <property type="molecule type" value="Genomic_DNA"/>
</dbReference>
<dbReference type="EMBL" id="U66764">
    <property type="protein sequence ID" value="AAB18388.1"/>
    <property type="status" value="JOINED"/>
    <property type="molecule type" value="Genomic_DNA"/>
</dbReference>
<dbReference type="EMBL" id="U66765">
    <property type="protein sequence ID" value="AAB18388.1"/>
    <property type="status" value="JOINED"/>
    <property type="molecule type" value="Genomic_DNA"/>
</dbReference>
<dbReference type="EMBL" id="U66766">
    <property type="protein sequence ID" value="AAB18388.1"/>
    <property type="status" value="JOINED"/>
    <property type="molecule type" value="Genomic_DNA"/>
</dbReference>
<dbReference type="EMBL" id="U66768">
    <property type="protein sequence ID" value="AAB18388.1"/>
    <property type="status" value="JOINED"/>
    <property type="molecule type" value="Genomic_DNA"/>
</dbReference>
<dbReference type="EMBL" id="U66769">
    <property type="protein sequence ID" value="AAB18388.1"/>
    <property type="status" value="JOINED"/>
    <property type="molecule type" value="Genomic_DNA"/>
</dbReference>
<dbReference type="EMBL" id="U66770">
    <property type="protein sequence ID" value="AAB18388.1"/>
    <property type="status" value="JOINED"/>
    <property type="molecule type" value="Genomic_DNA"/>
</dbReference>
<dbReference type="EMBL" id="U66771">
    <property type="protein sequence ID" value="AAB18388.1"/>
    <property type="status" value="JOINED"/>
    <property type="molecule type" value="Genomic_DNA"/>
</dbReference>
<dbReference type="EMBL" id="U66772">
    <property type="protein sequence ID" value="AAB18388.1"/>
    <property type="status" value="JOINED"/>
    <property type="molecule type" value="Genomic_DNA"/>
</dbReference>
<dbReference type="EMBL" id="U66773">
    <property type="protein sequence ID" value="AAB18388.1"/>
    <property type="status" value="JOINED"/>
    <property type="molecule type" value="Genomic_DNA"/>
</dbReference>
<dbReference type="EMBL" id="U66774">
    <property type="protein sequence ID" value="AAB18388.1"/>
    <property type="status" value="JOINED"/>
    <property type="molecule type" value="Genomic_DNA"/>
</dbReference>
<dbReference type="EMBL" id="U66775">
    <property type="protein sequence ID" value="AAB18388.1"/>
    <property type="status" value="JOINED"/>
    <property type="molecule type" value="Genomic_DNA"/>
</dbReference>
<dbReference type="EMBL" id="U66776">
    <property type="protein sequence ID" value="AAB18388.1"/>
    <property type="status" value="JOINED"/>
    <property type="molecule type" value="Genomic_DNA"/>
</dbReference>
<dbReference type="EMBL" id="U66777">
    <property type="protein sequence ID" value="AAB18388.1"/>
    <property type="status" value="JOINED"/>
    <property type="molecule type" value="Genomic_DNA"/>
</dbReference>
<dbReference type="EMBL" id="U66778">
    <property type="protein sequence ID" value="AAB18388.1"/>
    <property type="status" value="JOINED"/>
    <property type="molecule type" value="Genomic_DNA"/>
</dbReference>
<dbReference type="EMBL" id="U66779">
    <property type="protein sequence ID" value="AAB18388.1"/>
    <property type="status" value="JOINED"/>
    <property type="molecule type" value="Genomic_DNA"/>
</dbReference>
<dbReference type="EMBL" id="U66780">
    <property type="protein sequence ID" value="AAB18388.1"/>
    <property type="status" value="JOINED"/>
    <property type="molecule type" value="Genomic_DNA"/>
</dbReference>
<dbReference type="EMBL" id="U66781">
    <property type="protein sequence ID" value="AAB18388.1"/>
    <property type="status" value="JOINED"/>
    <property type="molecule type" value="Genomic_DNA"/>
</dbReference>
<dbReference type="EMBL" id="U66782">
    <property type="protein sequence ID" value="AAB18388.1"/>
    <property type="status" value="JOINED"/>
    <property type="molecule type" value="Genomic_DNA"/>
</dbReference>
<dbReference type="EMBL" id="U66783">
    <property type="protein sequence ID" value="AAB18388.1"/>
    <property type="status" value="JOINED"/>
    <property type="molecule type" value="Genomic_DNA"/>
</dbReference>
<dbReference type="EMBL" id="U66784">
    <property type="protein sequence ID" value="AAB18388.1"/>
    <property type="status" value="JOINED"/>
    <property type="molecule type" value="Genomic_DNA"/>
</dbReference>
<dbReference type="EMBL" id="U66785">
    <property type="protein sequence ID" value="AAB18388.1"/>
    <property type="status" value="JOINED"/>
    <property type="molecule type" value="Genomic_DNA"/>
</dbReference>
<dbReference type="EMBL" id="U66786">
    <property type="protein sequence ID" value="AAB18388.1"/>
    <property type="status" value="JOINED"/>
    <property type="molecule type" value="Genomic_DNA"/>
</dbReference>
<dbReference type="EMBL" id="U66787">
    <property type="protein sequence ID" value="AAB18388.1"/>
    <property type="status" value="JOINED"/>
    <property type="molecule type" value="Genomic_DNA"/>
</dbReference>
<dbReference type="EMBL" id="U66788">
    <property type="protein sequence ID" value="AAB18388.1"/>
    <property type="status" value="JOINED"/>
    <property type="molecule type" value="Genomic_DNA"/>
</dbReference>
<dbReference type="EMBL" id="U66789">
    <property type="protein sequence ID" value="AAB18388.1"/>
    <property type="status" value="JOINED"/>
    <property type="molecule type" value="Genomic_DNA"/>
</dbReference>
<dbReference type="EMBL" id="U66790">
    <property type="protein sequence ID" value="AAB18388.1"/>
    <property type="status" value="JOINED"/>
    <property type="molecule type" value="Genomic_DNA"/>
</dbReference>
<dbReference type="EMBL" id="U66791">
    <property type="protein sequence ID" value="AAB18388.1"/>
    <property type="status" value="JOINED"/>
    <property type="molecule type" value="Genomic_DNA"/>
</dbReference>
<dbReference type="EMBL" id="U66792">
    <property type="protein sequence ID" value="AAB18388.1"/>
    <property type="status" value="JOINED"/>
    <property type="molecule type" value="Genomic_DNA"/>
</dbReference>
<dbReference type="EMBL" id="U66793">
    <property type="protein sequence ID" value="AAB18388.1"/>
    <property type="status" value="JOINED"/>
    <property type="molecule type" value="Genomic_DNA"/>
</dbReference>
<dbReference type="EMBL" id="U66794">
    <property type="protein sequence ID" value="AAB18388.1"/>
    <property type="status" value="JOINED"/>
    <property type="molecule type" value="Genomic_DNA"/>
</dbReference>
<dbReference type="EMBL" id="U66795">
    <property type="protein sequence ID" value="AAB18388.1"/>
    <property type="status" value="JOINED"/>
    <property type="molecule type" value="Genomic_DNA"/>
</dbReference>
<dbReference type="EMBL" id="AL583853">
    <property type="protein sequence ID" value="CAH70492.1"/>
    <property type="molecule type" value="Genomic_DNA"/>
</dbReference>
<dbReference type="EMBL" id="AL356124">
    <property type="protein sequence ID" value="CAH70492.1"/>
    <property type="status" value="JOINED"/>
    <property type="molecule type" value="Genomic_DNA"/>
</dbReference>
<dbReference type="EMBL" id="AL445439">
    <property type="protein sequence ID" value="CAH70492.1"/>
    <property type="status" value="JOINED"/>
    <property type="molecule type" value="Genomic_DNA"/>
</dbReference>
<dbReference type="EMBL" id="AL513527">
    <property type="protein sequence ID" value="CAH70492.1"/>
    <property type="status" value="JOINED"/>
    <property type="molecule type" value="Genomic_DNA"/>
</dbReference>
<dbReference type="EMBL" id="AL590613">
    <property type="protein sequence ID" value="CAH70492.1"/>
    <property type="status" value="JOINED"/>
    <property type="molecule type" value="Genomic_DNA"/>
</dbReference>
<dbReference type="EMBL" id="AL669984">
    <property type="protein sequence ID" value="CAH70492.1"/>
    <property type="status" value="JOINED"/>
    <property type="molecule type" value="Genomic_DNA"/>
</dbReference>
<dbReference type="EMBL" id="AL590613">
    <property type="protein sequence ID" value="CAH70771.1"/>
    <property type="molecule type" value="Genomic_DNA"/>
</dbReference>
<dbReference type="EMBL" id="AL356124">
    <property type="protein sequence ID" value="CAH70771.1"/>
    <property type="status" value="JOINED"/>
    <property type="molecule type" value="Genomic_DNA"/>
</dbReference>
<dbReference type="EMBL" id="AL445439">
    <property type="protein sequence ID" value="CAH70771.1"/>
    <property type="status" value="JOINED"/>
    <property type="molecule type" value="Genomic_DNA"/>
</dbReference>
<dbReference type="EMBL" id="AL513527">
    <property type="protein sequence ID" value="CAH70771.1"/>
    <property type="status" value="JOINED"/>
    <property type="molecule type" value="Genomic_DNA"/>
</dbReference>
<dbReference type="EMBL" id="AL583853">
    <property type="protein sequence ID" value="CAH70771.1"/>
    <property type="status" value="JOINED"/>
    <property type="molecule type" value="Genomic_DNA"/>
</dbReference>
<dbReference type="EMBL" id="AL669984">
    <property type="protein sequence ID" value="CAH70771.1"/>
    <property type="status" value="JOINED"/>
    <property type="molecule type" value="Genomic_DNA"/>
</dbReference>
<dbReference type="EMBL" id="AL445439">
    <property type="protein sequence ID" value="CAH72952.1"/>
    <property type="molecule type" value="Genomic_DNA"/>
</dbReference>
<dbReference type="EMBL" id="AL356124">
    <property type="protein sequence ID" value="CAH72952.1"/>
    <property type="status" value="JOINED"/>
    <property type="molecule type" value="Genomic_DNA"/>
</dbReference>
<dbReference type="EMBL" id="AL513527">
    <property type="protein sequence ID" value="CAH72952.1"/>
    <property type="status" value="JOINED"/>
    <property type="molecule type" value="Genomic_DNA"/>
</dbReference>
<dbReference type="EMBL" id="AL583853">
    <property type="protein sequence ID" value="CAH72952.1"/>
    <property type="status" value="JOINED"/>
    <property type="molecule type" value="Genomic_DNA"/>
</dbReference>
<dbReference type="EMBL" id="AL590613">
    <property type="protein sequence ID" value="CAH72952.1"/>
    <property type="status" value="JOINED"/>
    <property type="molecule type" value="Genomic_DNA"/>
</dbReference>
<dbReference type="EMBL" id="AL669984">
    <property type="protein sequence ID" value="CAH72952.1"/>
    <property type="status" value="JOINED"/>
    <property type="molecule type" value="Genomic_DNA"/>
</dbReference>
<dbReference type="EMBL" id="AL513527">
    <property type="protein sequence ID" value="CAI15185.1"/>
    <property type="molecule type" value="Genomic_DNA"/>
</dbReference>
<dbReference type="EMBL" id="AL356124">
    <property type="protein sequence ID" value="CAI15185.1"/>
    <property type="status" value="JOINED"/>
    <property type="molecule type" value="Genomic_DNA"/>
</dbReference>
<dbReference type="EMBL" id="AL445439">
    <property type="protein sequence ID" value="CAI15185.1"/>
    <property type="status" value="JOINED"/>
    <property type="molecule type" value="Genomic_DNA"/>
</dbReference>
<dbReference type="EMBL" id="AL583853">
    <property type="protein sequence ID" value="CAI15185.1"/>
    <property type="status" value="JOINED"/>
    <property type="molecule type" value="Genomic_DNA"/>
</dbReference>
<dbReference type="EMBL" id="AL590613">
    <property type="protein sequence ID" value="CAI15185.1"/>
    <property type="status" value="JOINED"/>
    <property type="molecule type" value="Genomic_DNA"/>
</dbReference>
<dbReference type="EMBL" id="AL669984">
    <property type="protein sequence ID" value="CAI15185.1"/>
    <property type="status" value="JOINED"/>
    <property type="molecule type" value="Genomic_DNA"/>
</dbReference>
<dbReference type="EMBL" id="AL669984">
    <property type="protein sequence ID" value="CAI16682.1"/>
    <property type="molecule type" value="Genomic_DNA"/>
</dbReference>
<dbReference type="EMBL" id="AL356124">
    <property type="protein sequence ID" value="CAI16682.1"/>
    <property type="status" value="JOINED"/>
    <property type="molecule type" value="Genomic_DNA"/>
</dbReference>
<dbReference type="EMBL" id="AL445439">
    <property type="protein sequence ID" value="CAI16682.1"/>
    <property type="status" value="JOINED"/>
    <property type="molecule type" value="Genomic_DNA"/>
</dbReference>
<dbReference type="EMBL" id="AL513527">
    <property type="protein sequence ID" value="CAI16682.1"/>
    <property type="status" value="JOINED"/>
    <property type="molecule type" value="Genomic_DNA"/>
</dbReference>
<dbReference type="EMBL" id="AL583853">
    <property type="protein sequence ID" value="CAI16682.1"/>
    <property type="status" value="JOINED"/>
    <property type="molecule type" value="Genomic_DNA"/>
</dbReference>
<dbReference type="EMBL" id="AL590613">
    <property type="protein sequence ID" value="CAI16682.1"/>
    <property type="status" value="JOINED"/>
    <property type="molecule type" value="Genomic_DNA"/>
</dbReference>
<dbReference type="EMBL" id="AL356124">
    <property type="protein sequence ID" value="CAI22470.1"/>
    <property type="molecule type" value="Genomic_DNA"/>
</dbReference>
<dbReference type="EMBL" id="AL445439">
    <property type="protein sequence ID" value="CAI22470.1"/>
    <property type="status" value="JOINED"/>
    <property type="molecule type" value="Genomic_DNA"/>
</dbReference>
<dbReference type="EMBL" id="AL513527">
    <property type="protein sequence ID" value="CAI22470.1"/>
    <property type="status" value="JOINED"/>
    <property type="molecule type" value="Genomic_DNA"/>
</dbReference>
<dbReference type="EMBL" id="AL583853">
    <property type="protein sequence ID" value="CAI22470.1"/>
    <property type="status" value="JOINED"/>
    <property type="molecule type" value="Genomic_DNA"/>
</dbReference>
<dbReference type="EMBL" id="AL590613">
    <property type="protein sequence ID" value="CAI22470.1"/>
    <property type="status" value="JOINED"/>
    <property type="molecule type" value="Genomic_DNA"/>
</dbReference>
<dbReference type="EMBL" id="AL669984">
    <property type="protein sequence ID" value="CAI22470.1"/>
    <property type="status" value="JOINED"/>
    <property type="molecule type" value="Genomic_DNA"/>
</dbReference>
<dbReference type="EMBL" id="AL589927">
    <property type="status" value="NOT_ANNOTATED_CDS"/>
    <property type="molecule type" value="Genomic_DNA"/>
</dbReference>
<dbReference type="EMBL" id="M59832">
    <property type="protein sequence ID" value="AAA63215.1"/>
    <property type="status" value="ALT_FRAME"/>
    <property type="molecule type" value="mRNA"/>
</dbReference>
<dbReference type="CCDS" id="CCDS5138.1"/>
<dbReference type="PIR" id="PX0082">
    <property type="entry name" value="MMHUMH"/>
</dbReference>
<dbReference type="RefSeq" id="NP_000417.2">
    <property type="nucleotide sequence ID" value="NM_000426.3"/>
</dbReference>
<dbReference type="RefSeq" id="NP_001073291.1">
    <property type="nucleotide sequence ID" value="NM_001079823.1"/>
</dbReference>
<dbReference type="PDB" id="4YEP">
    <property type="method" value="X-ray"/>
    <property type="resolution" value="1.19 A"/>
    <property type="chains" value="A/B=1181-1362"/>
</dbReference>
<dbReference type="PDB" id="4YEQ">
    <property type="method" value="X-ray"/>
    <property type="resolution" value="3.20 A"/>
    <property type="chains" value="U=1177-1379"/>
</dbReference>
<dbReference type="PDBsum" id="4YEP"/>
<dbReference type="PDBsum" id="4YEQ"/>
<dbReference type="SMR" id="P24043"/>
<dbReference type="BioGRID" id="110102">
    <property type="interactions" value="23"/>
</dbReference>
<dbReference type="ComplexPortal" id="CPX-1771">
    <property type="entry name" value="Laminin-211 complex"/>
</dbReference>
<dbReference type="ComplexPortal" id="CPX-1773">
    <property type="entry name" value="Laminin-221 complex"/>
</dbReference>
<dbReference type="ComplexPortal" id="CPX-1781">
    <property type="entry name" value="Laminin-213 complex"/>
</dbReference>
<dbReference type="DIP" id="DIP-42562N"/>
<dbReference type="FunCoup" id="P24043">
    <property type="interactions" value="607"/>
</dbReference>
<dbReference type="IntAct" id="P24043">
    <property type="interactions" value="14"/>
</dbReference>
<dbReference type="MINT" id="P24043"/>
<dbReference type="STRING" id="9606.ENSP00000400365"/>
<dbReference type="ChEMBL" id="CHEMBL2364187"/>
<dbReference type="UniLectin" id="P24043"/>
<dbReference type="GlyConnect" id="1439">
    <property type="glycosylation" value="40 N-Linked glycans (20 sites)"/>
</dbReference>
<dbReference type="GlyCosmos" id="P24043">
    <property type="glycosylation" value="31 sites, 40 glycans"/>
</dbReference>
<dbReference type="GlyGen" id="P24043">
    <property type="glycosylation" value="35 sites, 112 N-linked glycans (22 sites), 2 O-linked glycans (4 sites)"/>
</dbReference>
<dbReference type="iPTMnet" id="P24043"/>
<dbReference type="PhosphoSitePlus" id="P24043"/>
<dbReference type="BioMuta" id="LAMA2"/>
<dbReference type="DMDM" id="215274259"/>
<dbReference type="jPOST" id="P24043"/>
<dbReference type="MassIVE" id="P24043"/>
<dbReference type="PaxDb" id="9606-ENSP00000400365"/>
<dbReference type="PeptideAtlas" id="P24043"/>
<dbReference type="ProteomicsDB" id="54178"/>
<dbReference type="ABCD" id="P24043">
    <property type="antibodies" value="1 sequenced antibody"/>
</dbReference>
<dbReference type="Antibodypedia" id="763">
    <property type="antibodies" value="206 antibodies from 33 providers"/>
</dbReference>
<dbReference type="DNASU" id="3908"/>
<dbReference type="Ensembl" id="ENST00000421865.3">
    <property type="protein sequence ID" value="ENSP00000400365.2"/>
    <property type="gene ID" value="ENSG00000196569.14"/>
</dbReference>
<dbReference type="GeneID" id="3908"/>
<dbReference type="KEGG" id="hsa:3908"/>
<dbReference type="MANE-Select" id="ENST00000421865.3">
    <property type="protein sequence ID" value="ENSP00000400365.2"/>
    <property type="RefSeq nucleotide sequence ID" value="NM_000426.4"/>
    <property type="RefSeq protein sequence ID" value="NP_000417.3"/>
</dbReference>
<dbReference type="UCSC" id="uc063rgy.1">
    <property type="organism name" value="human"/>
</dbReference>
<dbReference type="AGR" id="HGNC:6482"/>
<dbReference type="CTD" id="3908"/>
<dbReference type="DisGeNET" id="3908"/>
<dbReference type="GeneCards" id="LAMA2"/>
<dbReference type="GeneReviews" id="LAMA2"/>
<dbReference type="HGNC" id="HGNC:6482">
    <property type="gene designation" value="LAMA2"/>
</dbReference>
<dbReference type="HPA" id="ENSG00000196569">
    <property type="expression patterns" value="Tissue enhanced (placenta)"/>
</dbReference>
<dbReference type="MalaCards" id="LAMA2"/>
<dbReference type="MIM" id="156225">
    <property type="type" value="gene"/>
</dbReference>
<dbReference type="MIM" id="607855">
    <property type="type" value="phenotype"/>
</dbReference>
<dbReference type="MIM" id="618138">
    <property type="type" value="phenotype"/>
</dbReference>
<dbReference type="neXtProt" id="NX_P24043"/>
<dbReference type="OpenTargets" id="ENSG00000196569"/>
<dbReference type="Orphanet" id="258">
    <property type="disease" value="Laminin subunit alpha 2-related congenital muscular dystrophy"/>
</dbReference>
<dbReference type="PharmGKB" id="PA30271"/>
<dbReference type="VEuPathDB" id="HostDB:ENSG00000196569"/>
<dbReference type="eggNOG" id="KOG1836">
    <property type="taxonomic scope" value="Eukaryota"/>
</dbReference>
<dbReference type="GeneTree" id="ENSGT00940000155362"/>
<dbReference type="InParanoid" id="P24043"/>
<dbReference type="OMA" id="SHSRINF"/>
<dbReference type="OrthoDB" id="10011303at2759"/>
<dbReference type="PAN-GO" id="P24043">
    <property type="GO annotations" value="5 GO annotations based on evolutionary models"/>
</dbReference>
<dbReference type="PhylomeDB" id="P24043"/>
<dbReference type="TreeFam" id="TF335359"/>
<dbReference type="PathwayCommons" id="P24043"/>
<dbReference type="Reactome" id="R-HSA-3000157">
    <property type="pathway name" value="Laminin interactions"/>
</dbReference>
<dbReference type="Reactome" id="R-HSA-3000171">
    <property type="pathway name" value="Non-integrin membrane-ECM interactions"/>
</dbReference>
<dbReference type="Reactome" id="R-HSA-3000178">
    <property type="pathway name" value="ECM proteoglycans"/>
</dbReference>
<dbReference type="Reactome" id="R-HSA-8874081">
    <property type="pathway name" value="MET activates PTK2 signaling"/>
</dbReference>
<dbReference type="Reactome" id="R-HSA-9619665">
    <property type="pathway name" value="EGR2 and SOX10-mediated initiation of Schwann cell myelination"/>
</dbReference>
<dbReference type="Reactome" id="R-HSA-9913351">
    <property type="pathway name" value="Formation of the dystrophin-glycoprotein complex (DGC)"/>
</dbReference>
<dbReference type="SignaLink" id="P24043"/>
<dbReference type="SIGNOR" id="P24043"/>
<dbReference type="BioGRID-ORCS" id="3908">
    <property type="hits" value="10 hits in 1158 CRISPR screens"/>
</dbReference>
<dbReference type="ChiTaRS" id="LAMA2">
    <property type="organism name" value="human"/>
</dbReference>
<dbReference type="EvolutionaryTrace" id="P24043"/>
<dbReference type="GeneWiki" id="Laminin,_alpha_2"/>
<dbReference type="GenomeRNAi" id="3908"/>
<dbReference type="Pharos" id="P24043">
    <property type="development level" value="Tbio"/>
</dbReference>
<dbReference type="PRO" id="PR:P24043"/>
<dbReference type="Proteomes" id="UP000005640">
    <property type="component" value="Chromosome 6"/>
</dbReference>
<dbReference type="RNAct" id="P24043">
    <property type="molecule type" value="protein"/>
</dbReference>
<dbReference type="Bgee" id="ENSG00000196569">
    <property type="expression patterns" value="Expressed in mucosa of stomach and 199 other cell types or tissues"/>
</dbReference>
<dbReference type="ExpressionAtlas" id="P24043">
    <property type="expression patterns" value="baseline and differential"/>
</dbReference>
<dbReference type="GO" id="GO:0005604">
    <property type="term" value="C:basement membrane"/>
    <property type="evidence" value="ECO:0000314"/>
    <property type="project" value="UniProtKB"/>
</dbReference>
<dbReference type="GO" id="GO:0062023">
    <property type="term" value="C:collagen-containing extracellular matrix"/>
    <property type="evidence" value="ECO:0007005"/>
    <property type="project" value="BHF-UCL"/>
</dbReference>
<dbReference type="GO" id="GO:0043197">
    <property type="term" value="C:dendritic spine"/>
    <property type="evidence" value="ECO:0007669"/>
    <property type="project" value="Ensembl"/>
</dbReference>
<dbReference type="GO" id="GO:0005576">
    <property type="term" value="C:extracellular region"/>
    <property type="evidence" value="ECO:0000304"/>
    <property type="project" value="Reactome"/>
</dbReference>
<dbReference type="GO" id="GO:0031594">
    <property type="term" value="C:neuromuscular junction"/>
    <property type="evidence" value="ECO:0007669"/>
    <property type="project" value="Ensembl"/>
</dbReference>
<dbReference type="GO" id="GO:0098637">
    <property type="term" value="C:protein complex involved in cell-matrix adhesion"/>
    <property type="evidence" value="ECO:0000303"/>
    <property type="project" value="ComplexPortal"/>
</dbReference>
<dbReference type="GO" id="GO:0042383">
    <property type="term" value="C:sarcolemma"/>
    <property type="evidence" value="ECO:0007669"/>
    <property type="project" value="Ensembl"/>
</dbReference>
<dbReference type="GO" id="GO:0043083">
    <property type="term" value="C:synaptic cleft"/>
    <property type="evidence" value="ECO:0007669"/>
    <property type="project" value="Ensembl"/>
</dbReference>
<dbReference type="GO" id="GO:0005102">
    <property type="term" value="F:signaling receptor binding"/>
    <property type="evidence" value="ECO:0007669"/>
    <property type="project" value="InterPro"/>
</dbReference>
<dbReference type="GO" id="GO:0005198">
    <property type="term" value="F:structural molecule activity"/>
    <property type="evidence" value="ECO:0000304"/>
    <property type="project" value="ProtInc"/>
</dbReference>
<dbReference type="GO" id="GO:0007411">
    <property type="term" value="P:axon guidance"/>
    <property type="evidence" value="ECO:0007669"/>
    <property type="project" value="Ensembl"/>
</dbReference>
<dbReference type="GO" id="GO:0007155">
    <property type="term" value="P:cell adhesion"/>
    <property type="evidence" value="ECO:0007669"/>
    <property type="project" value="UniProtKB-KW"/>
</dbReference>
<dbReference type="GO" id="GO:0035633">
    <property type="term" value="P:maintenance of blood-brain barrier"/>
    <property type="evidence" value="ECO:0000303"/>
    <property type="project" value="ARUK-UCL"/>
</dbReference>
<dbReference type="GO" id="GO:0007517">
    <property type="term" value="P:muscle organ development"/>
    <property type="evidence" value="ECO:0000304"/>
    <property type="project" value="ProtInc"/>
</dbReference>
<dbReference type="GO" id="GO:0045785">
    <property type="term" value="P:positive regulation of cell adhesion"/>
    <property type="evidence" value="ECO:0000303"/>
    <property type="project" value="ComplexPortal"/>
</dbReference>
<dbReference type="GO" id="GO:2001046">
    <property type="term" value="P:positive regulation of integrin-mediated signaling pathway"/>
    <property type="evidence" value="ECO:0000303"/>
    <property type="project" value="ComplexPortal"/>
</dbReference>
<dbReference type="GO" id="GO:0051149">
    <property type="term" value="P:positive regulation of muscle cell differentiation"/>
    <property type="evidence" value="ECO:0000303"/>
    <property type="project" value="ComplexPortal"/>
</dbReference>
<dbReference type="GO" id="GO:0032224">
    <property type="term" value="P:positive regulation of synaptic transmission, cholinergic"/>
    <property type="evidence" value="ECO:0007669"/>
    <property type="project" value="Ensembl"/>
</dbReference>
<dbReference type="GO" id="GO:0110011">
    <property type="term" value="P:regulation of basement membrane organization"/>
    <property type="evidence" value="ECO:0000303"/>
    <property type="project" value="ComplexPortal"/>
</dbReference>
<dbReference type="GO" id="GO:0030334">
    <property type="term" value="P:regulation of cell migration"/>
    <property type="evidence" value="ECO:0007669"/>
    <property type="project" value="InterPro"/>
</dbReference>
<dbReference type="GO" id="GO:0045995">
    <property type="term" value="P:regulation of embryonic development"/>
    <property type="evidence" value="ECO:0007669"/>
    <property type="project" value="InterPro"/>
</dbReference>
<dbReference type="GO" id="GO:0014037">
    <property type="term" value="P:Schwann cell differentiation"/>
    <property type="evidence" value="ECO:0007669"/>
    <property type="project" value="Ensembl"/>
</dbReference>
<dbReference type="CDD" id="cd00055">
    <property type="entry name" value="EGF_Lam"/>
    <property type="match status" value="15"/>
</dbReference>
<dbReference type="CDD" id="cd00110">
    <property type="entry name" value="LamG"/>
    <property type="match status" value="5"/>
</dbReference>
<dbReference type="FunFam" id="2.10.25.10:FF:000106">
    <property type="entry name" value="Heparan sulfate proteoglycan 2"/>
    <property type="match status" value="1"/>
</dbReference>
<dbReference type="FunFam" id="2.10.25.10:FF:000074">
    <property type="entry name" value="Laminin subunit alpha"/>
    <property type="match status" value="1"/>
</dbReference>
<dbReference type="FunFam" id="2.10.25.10:FF:000069">
    <property type="entry name" value="Laminin subunit alpha 1"/>
    <property type="match status" value="1"/>
</dbReference>
<dbReference type="FunFam" id="2.10.25.10:FF:000082">
    <property type="entry name" value="Laminin subunit alpha 1"/>
    <property type="match status" value="1"/>
</dbReference>
<dbReference type="FunFam" id="2.10.25.10:FF:000242">
    <property type="entry name" value="Laminin subunit alpha 1"/>
    <property type="match status" value="1"/>
</dbReference>
<dbReference type="FunFam" id="2.10.25.10:FF:000512">
    <property type="entry name" value="Laminin subunit alpha 1"/>
    <property type="match status" value="1"/>
</dbReference>
<dbReference type="FunFam" id="1.10.287.950:FF:000005">
    <property type="entry name" value="Laminin subunit alpha 2"/>
    <property type="match status" value="1"/>
</dbReference>
<dbReference type="FunFam" id="2.10.25.10:FF:000189">
    <property type="entry name" value="Laminin subunit alpha 2"/>
    <property type="match status" value="1"/>
</dbReference>
<dbReference type="FunFam" id="2.10.25.10:FF:000250">
    <property type="entry name" value="Laminin subunit alpha 2"/>
    <property type="match status" value="1"/>
</dbReference>
<dbReference type="FunFam" id="2.10.25.10:FF:000315">
    <property type="entry name" value="Laminin subunit alpha 2"/>
    <property type="match status" value="1"/>
</dbReference>
<dbReference type="FunFam" id="2.170.300.10:FF:000008">
    <property type="entry name" value="Laminin subunit alpha 2"/>
    <property type="match status" value="1"/>
</dbReference>
<dbReference type="FunFam" id="2.60.120.200:FF:000052">
    <property type="entry name" value="Laminin subunit alpha 2"/>
    <property type="match status" value="1"/>
</dbReference>
<dbReference type="FunFam" id="2.60.120.200:FF:000057">
    <property type="entry name" value="Laminin subunit alpha 2"/>
    <property type="match status" value="1"/>
</dbReference>
<dbReference type="FunFam" id="2.60.120.200:FF:000061">
    <property type="entry name" value="Laminin subunit alpha 2"/>
    <property type="match status" value="1"/>
</dbReference>
<dbReference type="FunFam" id="2.60.120.200:FF:000063">
    <property type="entry name" value="Laminin subunit alpha 2"/>
    <property type="match status" value="1"/>
</dbReference>
<dbReference type="FunFam" id="2.60.120.200:FF:000065">
    <property type="entry name" value="Laminin subunit alpha 2"/>
    <property type="match status" value="1"/>
</dbReference>
<dbReference type="FunFam" id="2.60.120.260:FF:000017">
    <property type="entry name" value="Laminin subunit alpha 2"/>
    <property type="match status" value="1"/>
</dbReference>
<dbReference type="FunFam" id="2.10.25.10:FF:000051">
    <property type="entry name" value="Laminin subunit alpha 4"/>
    <property type="match status" value="1"/>
</dbReference>
<dbReference type="FunFam" id="2.10.25.10:FF:000094">
    <property type="entry name" value="Laminin subunit alpha-2"/>
    <property type="match status" value="1"/>
</dbReference>
<dbReference type="FunFam" id="2.10.25.10:FF:000128">
    <property type="entry name" value="laminin subunit alpha-2 isoform X1"/>
    <property type="match status" value="2"/>
</dbReference>
<dbReference type="FunFam" id="2.10.25.10:FF:000461">
    <property type="entry name" value="laminin subunit alpha-2 isoform X1"/>
    <property type="match status" value="1"/>
</dbReference>
<dbReference type="FunFam" id="2.170.300.10:FF:000026">
    <property type="entry name" value="laminin subunit alpha-2 isoform X2"/>
    <property type="match status" value="1"/>
</dbReference>
<dbReference type="Gene3D" id="2.60.120.200">
    <property type="match status" value="5"/>
</dbReference>
<dbReference type="Gene3D" id="2.60.120.260">
    <property type="entry name" value="Galactose-binding domain-like"/>
    <property type="match status" value="1"/>
</dbReference>
<dbReference type="Gene3D" id="2.10.25.10">
    <property type="entry name" value="Laminin"/>
    <property type="match status" value="13"/>
</dbReference>
<dbReference type="Gene3D" id="2.170.300.10">
    <property type="entry name" value="Tie2 ligand-binding domain superfamily"/>
    <property type="match status" value="1"/>
</dbReference>
<dbReference type="InterPro" id="IPR013320">
    <property type="entry name" value="ConA-like_dom_sf"/>
</dbReference>
<dbReference type="InterPro" id="IPR000742">
    <property type="entry name" value="EGF-like_dom"/>
</dbReference>
<dbReference type="InterPro" id="IPR050440">
    <property type="entry name" value="Laminin/Netrin_ECM"/>
</dbReference>
<dbReference type="InterPro" id="IPR009254">
    <property type="entry name" value="Laminin_aI"/>
</dbReference>
<dbReference type="InterPro" id="IPR010307">
    <property type="entry name" value="Laminin_dom_II"/>
</dbReference>
<dbReference type="InterPro" id="IPR001791">
    <property type="entry name" value="Laminin_G"/>
</dbReference>
<dbReference type="InterPro" id="IPR000034">
    <property type="entry name" value="Laminin_IV"/>
</dbReference>
<dbReference type="InterPro" id="IPR008211">
    <property type="entry name" value="Laminin_N"/>
</dbReference>
<dbReference type="InterPro" id="IPR002049">
    <property type="entry name" value="LE_dom"/>
</dbReference>
<dbReference type="InterPro" id="IPR056863">
    <property type="entry name" value="LMN_ATRN_NET-like_EGF"/>
</dbReference>
<dbReference type="PANTHER" id="PTHR10574:SF291">
    <property type="entry name" value="LAMININ SUBUNIT ALPHA-2"/>
    <property type="match status" value="1"/>
</dbReference>
<dbReference type="PANTHER" id="PTHR10574">
    <property type="entry name" value="NETRIN/LAMININ-RELATED"/>
    <property type="match status" value="1"/>
</dbReference>
<dbReference type="Pfam" id="PF00053">
    <property type="entry name" value="EGF_laminin"/>
    <property type="match status" value="13"/>
</dbReference>
<dbReference type="Pfam" id="PF24973">
    <property type="entry name" value="EGF_LMN_ATRN"/>
    <property type="match status" value="2"/>
</dbReference>
<dbReference type="Pfam" id="PF00052">
    <property type="entry name" value="Laminin_B"/>
    <property type="match status" value="2"/>
</dbReference>
<dbReference type="Pfam" id="PF00054">
    <property type="entry name" value="Laminin_G_1"/>
    <property type="match status" value="4"/>
</dbReference>
<dbReference type="Pfam" id="PF02210">
    <property type="entry name" value="Laminin_G_2"/>
    <property type="match status" value="1"/>
</dbReference>
<dbReference type="Pfam" id="PF06008">
    <property type="entry name" value="Laminin_I"/>
    <property type="match status" value="1"/>
</dbReference>
<dbReference type="Pfam" id="PF06009">
    <property type="entry name" value="Laminin_II"/>
    <property type="match status" value="1"/>
</dbReference>
<dbReference type="Pfam" id="PF00055">
    <property type="entry name" value="Laminin_N"/>
    <property type="match status" value="1"/>
</dbReference>
<dbReference type="PRINTS" id="PR00011">
    <property type="entry name" value="EGFLAMININ"/>
</dbReference>
<dbReference type="SMART" id="SM00181">
    <property type="entry name" value="EGF"/>
    <property type="match status" value="8"/>
</dbReference>
<dbReference type="SMART" id="SM00180">
    <property type="entry name" value="EGF_Lam"/>
    <property type="match status" value="16"/>
</dbReference>
<dbReference type="SMART" id="SM00281">
    <property type="entry name" value="LamB"/>
    <property type="match status" value="2"/>
</dbReference>
<dbReference type="SMART" id="SM00282">
    <property type="entry name" value="LamG"/>
    <property type="match status" value="5"/>
</dbReference>
<dbReference type="SMART" id="SM00136">
    <property type="entry name" value="LamNT"/>
    <property type="match status" value="1"/>
</dbReference>
<dbReference type="SUPFAM" id="SSF49899">
    <property type="entry name" value="Concanavalin A-like lectins/glucanases"/>
    <property type="match status" value="5"/>
</dbReference>
<dbReference type="SUPFAM" id="SSF57196">
    <property type="entry name" value="EGF/Laminin"/>
    <property type="match status" value="13"/>
</dbReference>
<dbReference type="SUPFAM" id="SSF58104">
    <property type="entry name" value="Methyl-accepting chemotaxis protein (MCP) signaling domain"/>
    <property type="match status" value="1"/>
</dbReference>
<dbReference type="PROSITE" id="PS00022">
    <property type="entry name" value="EGF_1"/>
    <property type="match status" value="11"/>
</dbReference>
<dbReference type="PROSITE" id="PS01186">
    <property type="entry name" value="EGF_2"/>
    <property type="match status" value="3"/>
</dbReference>
<dbReference type="PROSITE" id="PS01248">
    <property type="entry name" value="EGF_LAM_1"/>
    <property type="match status" value="14"/>
</dbReference>
<dbReference type="PROSITE" id="PS50027">
    <property type="entry name" value="EGF_LAM_2"/>
    <property type="match status" value="15"/>
</dbReference>
<dbReference type="PROSITE" id="PS50025">
    <property type="entry name" value="LAM_G_DOMAIN"/>
    <property type="match status" value="5"/>
</dbReference>
<dbReference type="PROSITE" id="PS51115">
    <property type="entry name" value="LAMININ_IVA"/>
    <property type="match status" value="2"/>
</dbReference>
<dbReference type="PROSITE" id="PS51117">
    <property type="entry name" value="LAMININ_NTER"/>
    <property type="match status" value="1"/>
</dbReference>
<organism>
    <name type="scientific">Homo sapiens</name>
    <name type="common">Human</name>
    <dbReference type="NCBI Taxonomy" id="9606"/>
    <lineage>
        <taxon>Eukaryota</taxon>
        <taxon>Metazoa</taxon>
        <taxon>Chordata</taxon>
        <taxon>Craniata</taxon>
        <taxon>Vertebrata</taxon>
        <taxon>Euteleostomi</taxon>
        <taxon>Mammalia</taxon>
        <taxon>Eutheria</taxon>
        <taxon>Euarchontoglires</taxon>
        <taxon>Primates</taxon>
        <taxon>Haplorrhini</taxon>
        <taxon>Catarrhini</taxon>
        <taxon>Hominidae</taxon>
        <taxon>Homo</taxon>
    </lineage>
</organism>
<accession>P24043</accession>
<accession>Q14736</accession>
<accession>Q5VUM2</accession>
<accession>Q93022</accession>
<name>LAMA2_HUMAN</name>
<feature type="signal peptide" evidence="2">
    <location>
        <begin position="1"/>
        <end position="22"/>
    </location>
</feature>
<feature type="chain" id="PRO_0000017056" description="Laminin subunit alpha-2">
    <location>
        <begin position="23"/>
        <end position="3122"/>
    </location>
</feature>
<feature type="domain" description="Laminin N-terminal" evidence="6">
    <location>
        <begin position="35"/>
        <end position="286"/>
    </location>
</feature>
<feature type="domain" description="Laminin EGF-like 1" evidence="5">
    <location>
        <begin position="287"/>
        <end position="343"/>
    </location>
</feature>
<feature type="domain" description="Laminin EGF-like 2" evidence="5">
    <location>
        <begin position="344"/>
        <end position="413"/>
    </location>
</feature>
<feature type="domain" description="Laminin EGF-like 3" evidence="5">
    <location>
        <begin position="414"/>
        <end position="468"/>
    </location>
</feature>
<feature type="domain" description="Laminin EGF-like 4" evidence="5">
    <location>
        <begin position="469"/>
        <end position="517"/>
    </location>
</feature>
<feature type="domain" description="Laminin EGF-like 5; first part" evidence="5">
    <location>
        <begin position="518"/>
        <end position="527"/>
    </location>
</feature>
<feature type="domain" description="Laminin IV type A 1" evidence="4">
    <location>
        <begin position="531"/>
        <end position="723"/>
    </location>
</feature>
<feature type="domain" description="Laminin EGF-like 5; second part" evidence="5">
    <location>
        <begin position="724"/>
        <end position="756"/>
    </location>
</feature>
<feature type="domain" description="Laminin EGF-like 6" evidence="5">
    <location>
        <begin position="757"/>
        <end position="806"/>
    </location>
</feature>
<feature type="domain" description="Laminin EGF-like 7" evidence="5">
    <location>
        <begin position="807"/>
        <end position="864"/>
    </location>
</feature>
<feature type="domain" description="Laminin EGF-like 8" evidence="5">
    <location>
        <begin position="865"/>
        <end position="917"/>
    </location>
</feature>
<feature type="domain" description="Laminin EGF-like 9" evidence="5">
    <location>
        <begin position="918"/>
        <end position="966"/>
    </location>
</feature>
<feature type="domain" description="Laminin EGF-like 10" evidence="5">
    <location>
        <begin position="967"/>
        <end position="1013"/>
    </location>
</feature>
<feature type="domain" description="Laminin EGF-like 11" evidence="5">
    <location>
        <begin position="1014"/>
        <end position="1059"/>
    </location>
</feature>
<feature type="domain" description="Laminin EGF-like 12" evidence="5">
    <location>
        <begin position="1060"/>
        <end position="1105"/>
    </location>
</feature>
<feature type="domain" description="Laminin EGF-like 13" evidence="5">
    <location>
        <begin position="1106"/>
        <end position="1165"/>
    </location>
</feature>
<feature type="domain" description="Laminin EGF-like 14; first part" evidence="5">
    <location>
        <begin position="1166"/>
        <end position="1175"/>
    </location>
</feature>
<feature type="domain" description="Laminin IV type A 2" evidence="4">
    <location>
        <begin position="1176"/>
        <end position="1379"/>
    </location>
</feature>
<feature type="domain" description="Laminin EGF-like 14; second part" evidence="5">
    <location>
        <begin position="1380"/>
        <end position="1419"/>
    </location>
</feature>
<feature type="domain" description="Laminin EGF-like 15" evidence="5">
    <location>
        <begin position="1420"/>
        <end position="1468"/>
    </location>
</feature>
<feature type="domain" description="Laminin EGF-like 16" evidence="5">
    <location>
        <begin position="1469"/>
        <end position="1526"/>
    </location>
</feature>
<feature type="domain" description="Laminin EGF-like 17" evidence="5">
    <location>
        <begin position="1527"/>
        <end position="1573"/>
    </location>
</feature>
<feature type="domain" description="Laminin G-like 1" evidence="3">
    <location>
        <begin position="2145"/>
        <end position="2328"/>
    </location>
</feature>
<feature type="domain" description="Laminin G-like 2" evidence="3">
    <location>
        <begin position="2340"/>
        <end position="2521"/>
    </location>
</feature>
<feature type="domain" description="Laminin G-like 3" evidence="3">
    <location>
        <begin position="2526"/>
        <end position="2710"/>
    </location>
</feature>
<feature type="domain" description="Laminin G-like 4" evidence="3">
    <location>
        <begin position="2763"/>
        <end position="2934"/>
    </location>
</feature>
<feature type="domain" description="Laminin G-like 5" evidence="3">
    <location>
        <begin position="2939"/>
        <end position="3110"/>
    </location>
</feature>
<feature type="region of interest" description="Domain II and I">
    <location>
        <begin position="1574"/>
        <end position="2144"/>
    </location>
</feature>
<feature type="region of interest" description="Disordered" evidence="7">
    <location>
        <begin position="3043"/>
        <end position="3063"/>
    </location>
</feature>
<feature type="coiled-coil region" evidence="2">
    <location>
        <begin position="1630"/>
        <end position="2150"/>
    </location>
</feature>
<feature type="compositionally biased region" description="Polar residues" evidence="7">
    <location>
        <begin position="3043"/>
        <end position="3060"/>
    </location>
</feature>
<feature type="glycosylation site" description="N-linked (GlcNAc...) asparagine" evidence="2">
    <location>
        <position position="55"/>
    </location>
</feature>
<feature type="glycosylation site" description="N-linked (GlcNAc...) asparagine" evidence="2">
    <location>
        <position position="89"/>
    </location>
</feature>
<feature type="glycosylation site" description="N-linked (GlcNAc...) asparagine" evidence="2">
    <location>
        <position position="303"/>
    </location>
</feature>
<feature type="glycosylation site" description="N-linked (GlcNAc...) asparagine" evidence="10">
    <location>
        <position position="363"/>
    </location>
</feature>
<feature type="glycosylation site" description="N-linked (GlcNAc...) asparagine" evidence="2">
    <location>
        <position position="380"/>
    </location>
</feature>
<feature type="glycosylation site" description="N-linked (GlcNAc...) asparagine" evidence="2">
    <location>
        <position position="470"/>
    </location>
</feature>
<feature type="glycosylation site" description="N-linked (GlcNAc...) asparagine" evidence="2">
    <location>
        <position position="746"/>
    </location>
</feature>
<feature type="glycosylation site" description="N-linked (GlcNAc...) asparagine" evidence="2">
    <location>
        <position position="1061"/>
    </location>
</feature>
<feature type="glycosylation site" description="N-linked (GlcNAc...) asparagine" evidence="2">
    <location>
        <position position="1597"/>
    </location>
</feature>
<feature type="glycosylation site" description="N-linked (GlcNAc...) asparagine" evidence="2">
    <location>
        <position position="1614"/>
    </location>
</feature>
<feature type="glycosylation site" description="N-linked (GlcNAc...) asparagine" evidence="2">
    <location>
        <position position="1700"/>
    </location>
</feature>
<feature type="glycosylation site" description="N-linked (GlcNAc...) asparagine" evidence="2">
    <location>
        <position position="1810"/>
    </location>
</feature>
<feature type="glycosylation site" description="N-linked (GlcNAc...) asparagine" evidence="12">
    <location>
        <position position="1901"/>
    </location>
</feature>
<feature type="glycosylation site" description="N-linked (GlcNAc...) asparagine" evidence="12">
    <location>
        <position position="1916"/>
    </location>
</feature>
<feature type="glycosylation site" description="N-linked (GlcNAc...) asparagine" evidence="12">
    <location>
        <position position="1920"/>
    </location>
</feature>
<feature type="glycosylation site" description="N-linked (GlcNAc...) asparagine" evidence="12">
    <location>
        <position position="2017"/>
    </location>
</feature>
<feature type="glycosylation site" description="N-linked (GlcNAc...) asparagine" evidence="2">
    <location>
        <position position="2028"/>
    </location>
</feature>
<feature type="glycosylation site" description="N-linked (GlcNAc...) asparagine" evidence="2">
    <location>
        <position position="2045"/>
    </location>
</feature>
<feature type="glycosylation site" description="N-linked (GlcNAc...) asparagine" evidence="2">
    <location>
        <position position="2126"/>
    </location>
</feature>
<feature type="glycosylation site" description="N-linked (GlcNAc...) asparagine" evidence="2">
    <location>
        <position position="2240"/>
    </location>
</feature>
<feature type="glycosylation site" description="N-linked (GlcNAc...) asparagine" evidence="2">
    <location>
        <position position="2360"/>
    </location>
</feature>
<feature type="glycosylation site" description="N-linked (GlcNAc...) asparagine" evidence="2">
    <location>
        <position position="2435"/>
    </location>
</feature>
<feature type="glycosylation site" description="N-linked (GlcNAc...) asparagine" evidence="2">
    <location>
        <position position="2478"/>
    </location>
</feature>
<feature type="glycosylation site" description="N-linked (GlcNAc...) asparagine" evidence="2">
    <location>
        <position position="2551"/>
    </location>
</feature>
<feature type="glycosylation site" description="N-linked (GlcNAc...) asparagine" evidence="2">
    <location>
        <position position="2558"/>
    </location>
</feature>
<feature type="glycosylation site" description="N-linked (GlcNAc...) asparagine" evidence="12">
    <location>
        <position position="2648"/>
    </location>
</feature>
<feature type="glycosylation site" description="N-linked (GlcNAc...) asparagine" evidence="2">
    <location>
        <position position="2868"/>
    </location>
</feature>
<feature type="glycosylation site" description="N-linked (GlcNAc...) asparagine" evidence="2">
    <location>
        <position position="2893"/>
    </location>
</feature>
<feature type="disulfide bond" evidence="1">
    <location>
        <begin position="287"/>
        <end position="296"/>
    </location>
</feature>
<feature type="disulfide bond" evidence="1">
    <location>
        <begin position="289"/>
        <end position="307"/>
    </location>
</feature>
<feature type="disulfide bond" evidence="1">
    <location>
        <begin position="309"/>
        <end position="318"/>
    </location>
</feature>
<feature type="disulfide bond" evidence="1">
    <location>
        <begin position="321"/>
        <end position="341"/>
    </location>
</feature>
<feature type="disulfide bond" evidence="1">
    <location>
        <begin position="344"/>
        <end position="353"/>
    </location>
</feature>
<feature type="disulfide bond" evidence="1">
    <location>
        <begin position="346"/>
        <end position="378"/>
    </location>
</feature>
<feature type="disulfide bond" evidence="1">
    <location>
        <begin position="381"/>
        <end position="390"/>
    </location>
</feature>
<feature type="disulfide bond" evidence="1">
    <location>
        <begin position="393"/>
        <end position="411"/>
    </location>
</feature>
<feature type="disulfide bond" evidence="1">
    <location>
        <begin position="414"/>
        <end position="426"/>
    </location>
</feature>
<feature type="disulfide bond" evidence="1">
    <location>
        <begin position="416"/>
        <end position="442"/>
    </location>
</feature>
<feature type="disulfide bond" evidence="1">
    <location>
        <begin position="444"/>
        <end position="453"/>
    </location>
</feature>
<feature type="disulfide bond" evidence="1">
    <location>
        <begin position="456"/>
        <end position="466"/>
    </location>
</feature>
<feature type="disulfide bond" evidence="1">
    <location>
        <begin position="469"/>
        <end position="482"/>
    </location>
</feature>
<feature type="disulfide bond" evidence="1">
    <location>
        <begin position="471"/>
        <end position="486"/>
    </location>
</feature>
<feature type="disulfide bond" evidence="1">
    <location>
        <begin position="488"/>
        <end position="497"/>
    </location>
</feature>
<feature type="disulfide bond" evidence="1">
    <location>
        <begin position="500"/>
        <end position="515"/>
    </location>
</feature>
<feature type="disulfide bond" evidence="1">
    <location>
        <begin position="757"/>
        <end position="766"/>
    </location>
</feature>
<feature type="disulfide bond" evidence="1">
    <location>
        <begin position="759"/>
        <end position="773"/>
    </location>
</feature>
<feature type="disulfide bond" evidence="1">
    <location>
        <begin position="776"/>
        <end position="785"/>
    </location>
</feature>
<feature type="disulfide bond" evidence="1">
    <location>
        <begin position="788"/>
        <end position="804"/>
    </location>
</feature>
<feature type="disulfide bond" evidence="1">
    <location>
        <begin position="807"/>
        <end position="822"/>
    </location>
</feature>
<feature type="disulfide bond" evidence="1">
    <location>
        <begin position="809"/>
        <end position="832"/>
    </location>
</feature>
<feature type="disulfide bond" evidence="1">
    <location>
        <begin position="835"/>
        <end position="844"/>
    </location>
</feature>
<feature type="disulfide bond" evidence="1">
    <location>
        <begin position="847"/>
        <end position="862"/>
    </location>
</feature>
<feature type="disulfide bond" evidence="1">
    <location>
        <begin position="865"/>
        <end position="879"/>
    </location>
</feature>
<feature type="disulfide bond" evidence="1">
    <location>
        <begin position="867"/>
        <end position="886"/>
    </location>
</feature>
<feature type="disulfide bond" evidence="1">
    <location>
        <begin position="889"/>
        <end position="898"/>
    </location>
</feature>
<feature type="disulfide bond" evidence="1">
    <location>
        <begin position="901"/>
        <end position="915"/>
    </location>
</feature>
<feature type="disulfide bond" evidence="1">
    <location>
        <begin position="918"/>
        <end position="930"/>
    </location>
</feature>
<feature type="disulfide bond" evidence="1">
    <location>
        <begin position="920"/>
        <end position="937"/>
    </location>
</feature>
<feature type="disulfide bond" evidence="1">
    <location>
        <begin position="939"/>
        <end position="948"/>
    </location>
</feature>
<feature type="disulfide bond" evidence="1">
    <location>
        <begin position="951"/>
        <end position="964"/>
    </location>
</feature>
<feature type="disulfide bond" evidence="1">
    <location>
        <begin position="967"/>
        <end position="979"/>
    </location>
</feature>
<feature type="disulfide bond" evidence="1">
    <location>
        <begin position="969"/>
        <end position="985"/>
    </location>
</feature>
<feature type="disulfide bond" evidence="1">
    <location>
        <begin position="987"/>
        <end position="996"/>
    </location>
</feature>
<feature type="disulfide bond" evidence="1">
    <location>
        <begin position="999"/>
        <end position="1011"/>
    </location>
</feature>
<feature type="disulfide bond" evidence="1">
    <location>
        <begin position="1014"/>
        <end position="1023"/>
    </location>
</feature>
<feature type="disulfide bond" evidence="1">
    <location>
        <begin position="1016"/>
        <end position="1030"/>
    </location>
</feature>
<feature type="disulfide bond" evidence="1">
    <location>
        <begin position="1032"/>
        <end position="1041"/>
    </location>
</feature>
<feature type="disulfide bond" evidence="1">
    <location>
        <begin position="1044"/>
        <end position="1057"/>
    </location>
</feature>
<feature type="disulfide bond" evidence="1">
    <location>
        <begin position="1060"/>
        <end position="1072"/>
    </location>
</feature>
<feature type="disulfide bond" evidence="1">
    <location>
        <begin position="1062"/>
        <end position="1079"/>
    </location>
</feature>
<feature type="disulfide bond" evidence="1">
    <location>
        <begin position="1081"/>
        <end position="1090"/>
    </location>
</feature>
<feature type="disulfide bond" evidence="1">
    <location>
        <begin position="1093"/>
        <end position="1103"/>
    </location>
</feature>
<feature type="disulfide bond" evidence="1">
    <location>
        <begin position="1106"/>
        <end position="1118"/>
    </location>
</feature>
<feature type="disulfide bond" evidence="1">
    <location>
        <begin position="1108"/>
        <end position="1134"/>
    </location>
</feature>
<feature type="disulfide bond" evidence="1">
    <location>
        <begin position="1136"/>
        <end position="1145"/>
    </location>
</feature>
<feature type="disulfide bond" evidence="1">
    <location>
        <begin position="1148"/>
        <end position="1163"/>
    </location>
</feature>
<feature type="disulfide bond" evidence="1">
    <location>
        <begin position="1420"/>
        <end position="1429"/>
    </location>
</feature>
<feature type="disulfide bond" evidence="1">
    <location>
        <begin position="1422"/>
        <end position="1436"/>
    </location>
</feature>
<feature type="disulfide bond" evidence="1">
    <location>
        <begin position="1439"/>
        <end position="1448"/>
    </location>
</feature>
<feature type="disulfide bond" evidence="1">
    <location>
        <begin position="1451"/>
        <end position="1466"/>
    </location>
</feature>
<feature type="disulfide bond" evidence="1">
    <location>
        <begin position="1469"/>
        <end position="1484"/>
    </location>
</feature>
<feature type="disulfide bond" evidence="1">
    <location>
        <begin position="1471"/>
        <end position="1494"/>
    </location>
</feature>
<feature type="disulfide bond" evidence="1">
    <location>
        <begin position="1497"/>
        <end position="1506"/>
    </location>
</feature>
<feature type="disulfide bond" evidence="1">
    <location>
        <begin position="1509"/>
        <end position="1524"/>
    </location>
</feature>
<feature type="disulfide bond" evidence="1">
    <location>
        <begin position="1527"/>
        <end position="1539"/>
    </location>
</feature>
<feature type="disulfide bond" evidence="1">
    <location>
        <begin position="1529"/>
        <end position="1546"/>
    </location>
</feature>
<feature type="disulfide bond" evidence="1">
    <location>
        <begin position="1548"/>
        <end position="1557"/>
    </location>
</feature>
<feature type="disulfide bond" evidence="1">
    <location>
        <begin position="1560"/>
        <end position="1571"/>
    </location>
</feature>
<feature type="disulfide bond" description="Interchain" evidence="21">
    <location>
        <position position="1574"/>
    </location>
</feature>
<feature type="disulfide bond" description="Interchain" evidence="21">
    <location>
        <position position="1578"/>
    </location>
</feature>
<feature type="disulfide bond" evidence="1">
    <location>
        <begin position="2302"/>
        <end position="2328"/>
    </location>
</feature>
<feature type="disulfide bond" evidence="1">
    <location>
        <begin position="2495"/>
        <end position="2521"/>
    </location>
</feature>
<feature type="disulfide bond" evidence="1">
    <location>
        <begin position="2683"/>
        <end position="2710"/>
    </location>
</feature>
<feature type="disulfide bond" evidence="1">
    <location>
        <begin position="2909"/>
        <end position="2934"/>
    </location>
</feature>
<feature type="sequence variant" id="VAR_081607" description="In MDC1A." evidence="15">
    <location>
        <begin position="95"/>
        <end position="3122"/>
    </location>
</feature>
<feature type="sequence variant" id="VAR_047713" description="In dbSNP:rs34626728.">
    <original>R</original>
    <variation>S</variation>
    <location>
        <position position="96"/>
    </location>
</feature>
<feature type="sequence variant" id="VAR_081608" description="In MDC1A." evidence="15">
    <location>
        <begin position="110"/>
        <end position="3122"/>
    </location>
</feature>
<feature type="sequence variant" id="VAR_081609" description="In MDC1A." evidence="15">
    <location>
        <begin position="121"/>
        <end position="3122"/>
    </location>
</feature>
<feature type="sequence variant" id="VAR_081610" description="In LGMDR23." evidence="16">
    <location>
        <begin position="131"/>
        <end position="3122"/>
    </location>
</feature>
<feature type="sequence variant" id="VAR_081611" description="In LGMDR23." evidence="14">
    <original>W</original>
    <variation>G</variation>
    <location>
        <position position="152"/>
    </location>
</feature>
<feature type="sequence variant" id="VAR_081612" description="In dbSNP:rs886043693." evidence="16">
    <original>C</original>
    <variation>S</variation>
    <location>
        <position position="199"/>
    </location>
</feature>
<feature type="sequence variant" id="VAR_047714" description="In dbSNP:rs3778142.">
    <original>Y</original>
    <variation>H</variation>
    <location>
        <position position="240"/>
    </location>
</feature>
<feature type="sequence variant" id="VAR_081613" description="In LGMDR23; dbSNP:rs1562273395." evidence="14">
    <original>L</original>
    <variation>P</variation>
    <location>
        <position position="243"/>
    </location>
</feature>
<feature type="sequence variant" id="VAR_081614" description="In MDC1A." evidence="15">
    <location>
        <begin position="273"/>
        <end position="3122"/>
    </location>
</feature>
<feature type="sequence variant" id="VAR_081615" description="In LGMDR23; decreased protein abundance in patient cells." evidence="14">
    <original>G</original>
    <variation>R</variation>
    <location>
        <position position="284"/>
    </location>
</feature>
<feature type="sequence variant" id="VAR_081616" description="In MDC1A." evidence="15">
    <location>
        <begin position="435"/>
        <end position="3122"/>
    </location>
</feature>
<feature type="sequence variant" id="VAR_081617" description="In MDC1A; uncertain significance." evidence="15">
    <original>C</original>
    <variation>Y</variation>
    <location>
        <position position="518"/>
    </location>
</feature>
<feature type="sequence variant" id="VAR_015743" description="In MDC1A; dbSNP:rs121913574." evidence="9">
    <original>C</original>
    <variation>Y</variation>
    <location>
        <position position="527"/>
    </location>
</feature>
<feature type="sequence variant" id="VAR_004165" description="In dbSNP:rs118083923." evidence="20">
    <original>L</original>
    <variation>Q</variation>
    <location>
        <position position="545"/>
    </location>
</feature>
<feature type="sequence variant" id="VAR_004166" description="In dbSNP:rs3816665." evidence="20">
    <original>R</original>
    <variation>H</variation>
    <location>
        <position position="619"/>
    </location>
</feature>
<feature type="sequence variant" id="VAR_047715" description="In dbSNP:rs35879899.">
    <original>H</original>
    <variation>D</variation>
    <location>
        <position position="644"/>
    </location>
</feature>
<feature type="sequence variant" id="VAR_081618" description="In MDC1A." evidence="15">
    <location>
        <begin position="659"/>
        <end position="3122"/>
    </location>
</feature>
<feature type="sequence variant" id="VAR_081619" description="In MDC1A." evidence="15">
    <location>
        <begin position="744"/>
        <end position="3122"/>
    </location>
</feature>
<feature type="sequence variant" id="VAR_081620" description="In MDC1A; uncertain significance; dbSNP:rs117422805." evidence="15">
    <original>T</original>
    <variation>M</variation>
    <location>
        <position position="821"/>
    </location>
</feature>
<feature type="sequence variant" id="VAR_015744" description="In MDC1A; dbSNP:rs121913573." evidence="9">
    <original>C</original>
    <variation>R</variation>
    <location>
        <position position="862"/>
    </location>
</feature>
<feature type="sequence variant" id="VAR_004167" description="In dbSNP:rs35277491." evidence="20">
    <original>R</original>
    <variation>L</variation>
    <location>
        <position position="919"/>
    </location>
</feature>
<feature type="sequence variant" id="VAR_081621" description="In MDC1A." evidence="15">
    <location>
        <begin position="986"/>
        <end position="3122"/>
    </location>
</feature>
<feature type="sequence variant" id="VAR_081622" description="In MDC1A." evidence="15">
    <location>
        <begin position="1032"/>
        <end position="3122"/>
    </location>
</feature>
<feature type="sequence variant" id="VAR_081623" description="In MDC1A." evidence="15">
    <location>
        <begin position="1095"/>
        <end position="3122"/>
    </location>
</feature>
<feature type="sequence variant" id="VAR_047716" description="In dbSNP:rs2306942.">
    <original>V</original>
    <variation>M</variation>
    <location>
        <position position="1138"/>
    </location>
</feature>
<feature type="sequence variant" id="VAR_035819" description="In a breast cancer sample; somatic mutation." evidence="11">
    <original>P</original>
    <variation>A</variation>
    <location>
        <position position="1160"/>
    </location>
</feature>
<feature type="sequence variant" id="VAR_047717" description="In dbSNP:rs35889149.">
    <original>T</original>
    <variation>A</variation>
    <location>
        <position position="1205"/>
    </location>
</feature>
<feature type="sequence variant" id="VAR_081624" description="In MDC1A." evidence="15">
    <original>W</original>
    <variation>G</variation>
    <location>
        <position position="1311"/>
    </location>
</feature>
<feature type="sequence variant" id="VAR_081625" description="In MDC1A." evidence="15">
    <location>
        <begin position="1319"/>
        <end position="3122"/>
    </location>
</feature>
<feature type="sequence variant" id="VAR_081626" description="In MDC1A." evidence="15">
    <location>
        <begin position="1350"/>
        <end position="3122"/>
    </location>
</feature>
<feature type="sequence variant" id="VAR_081627" description="In LGMDR23; decreased protein abundance in patient cells; dbSNP:rs147077184." evidence="16">
    <original>A</original>
    <variation>V</variation>
    <location>
        <position position="1496"/>
    </location>
</feature>
<feature type="sequence variant" id="VAR_047718" description="In dbSNP:rs4143752.">
    <original>K</original>
    <variation>Q</variation>
    <location>
        <position position="1561"/>
    </location>
</feature>
<feature type="sequence variant" id="VAR_081628" description="In MDC1A." evidence="15">
    <location>
        <begin position="1826"/>
        <end position="3122"/>
    </location>
</feature>
<feature type="sequence variant" id="VAR_047719" description="In dbSNP:rs3828736.">
    <original>A</original>
    <variation>T</variation>
    <location>
        <position position="1945"/>
    </location>
</feature>
<feature type="sequence variant" id="VAR_081629" description="In MDC1A." evidence="15">
    <location>
        <position position="2172"/>
    </location>
</feature>
<feature type="sequence variant" id="VAR_081630" description="In MDC1A." evidence="15">
    <location>
        <begin position="2383"/>
        <end position="3122"/>
    </location>
</feature>
<feature type="sequence variant" id="VAR_081631" description="In LGMDR23; dbSNP:rs34367843." evidence="14">
    <original>R</original>
    <variation>S</variation>
    <location>
        <position position="2477"/>
    </location>
</feature>
<feature type="sequence variant" id="VAR_015745" description="In MDC1A; dbSNP:rs121913570." evidence="8">
    <original>L</original>
    <variation>P</variation>
    <location>
        <position position="2564"/>
    </location>
</feature>
<feature type="sequence variant" id="VAR_081632" description="In MDC1A." evidence="15">
    <location>
        <begin position="2578"/>
        <end position="3122"/>
    </location>
</feature>
<feature type="sequence variant" id="VAR_004168" evidence="20">
    <original>Y</original>
    <variation>H</variation>
    <location>
        <position position="2586"/>
    </location>
</feature>
<feature type="sequence variant" id="VAR_047720" description="In dbSNP:rs2229848." evidence="13 18 19">
    <original>A</original>
    <variation>V</variation>
    <location>
        <position position="2587"/>
    </location>
</feature>
<feature type="sequence variant" id="VAR_081633" description="In MDC1A." evidence="15">
    <location>
        <begin position="2604"/>
        <end position="3122"/>
    </location>
</feature>
<feature type="sequence variant" id="VAR_004169" evidence="20">
    <original>E</original>
    <variation>K</variation>
    <location>
        <position position="2614"/>
    </location>
</feature>
<feature type="sequence variant" id="VAR_081634" description="In MDC1A; dbSNP:rs2114849222." evidence="15">
    <original>G</original>
    <variation>A</variation>
    <location>
        <position position="2633"/>
    </location>
</feature>
<feature type="sequence variant" id="VAR_047721" description="In dbSNP:rs2244008.">
    <original>T</original>
    <variation>A</variation>
    <location>
        <position position="2636"/>
    </location>
</feature>
<feature type="sequence variant" id="VAR_081635" description="In MDC1A." evidence="15">
    <location>
        <begin position="2641"/>
        <end position="3122"/>
    </location>
</feature>
<feature type="sequence variant" id="VAR_081636" description="In MDC1A." evidence="15">
    <location>
        <begin position="2755"/>
        <end position="3122"/>
    </location>
</feature>
<feature type="sequence variant" id="VAR_076560" description="In MDC1A; dbSNP:rs886039896." evidence="17">
    <original>G</original>
    <variation>R</variation>
    <location>
        <position position="2889"/>
    </location>
</feature>
<feature type="sequence variant" id="VAR_047722" description="In dbSNP:rs34551216.">
    <original>T</original>
    <variation>A</variation>
    <location>
        <position position="3029"/>
    </location>
</feature>
<feature type="sequence conflict" description="In Ref. 2; AAB18388." evidence="21" ref="2">
    <original>A</original>
    <variation>R</variation>
    <location>
        <position position="588"/>
    </location>
</feature>
<feature type="sequence conflict" description="In Ref. 4." evidence="21" ref="4">
    <original>A</original>
    <variation>D</variation>
    <location>
        <position position="1740"/>
    </location>
</feature>
<feature type="sequence conflict" description="In Ref. 4." evidence="21" ref="4">
    <original>Q</original>
    <variation>G</variation>
    <location>
        <position position="1827"/>
    </location>
</feature>
<feature type="sequence conflict" description="In Ref. 5; AAA63215." evidence="21" ref="5">
    <original>A</original>
    <variation>V</variation>
    <location>
        <position position="1981"/>
    </location>
</feature>
<feature type="sequence conflict" description="In Ref. 2; AAB18388." evidence="21" ref="2">
    <original>S</original>
    <variation>Y</variation>
    <location>
        <position position="2437"/>
    </location>
</feature>
<feature type="sequence conflict" description="In Ref. 5; AAA63215." evidence="21" ref="5">
    <original>H</original>
    <variation>R</variation>
    <location>
        <position position="2624"/>
    </location>
</feature>
<feature type="sequence conflict" description="In Ref. 1; CAA81394 and 2; AAB18388." evidence="21" ref="1 2">
    <original>R</original>
    <variation>A</variation>
    <location>
        <position position="2807"/>
    </location>
</feature>
<feature type="sequence conflict" description="In Ref. 1; CAA81394 and 2; AAB18388." evidence="21" ref="1 2">
    <original>R</original>
    <variation>A</variation>
    <location>
        <position position="2969"/>
    </location>
</feature>
<feature type="strand" evidence="22">
    <location>
        <begin position="1184"/>
        <end position="1186"/>
    </location>
</feature>
<feature type="strand" evidence="22">
    <location>
        <begin position="1197"/>
        <end position="1199"/>
    </location>
</feature>
<feature type="strand" evidence="22">
    <location>
        <begin position="1210"/>
        <end position="1213"/>
    </location>
</feature>
<feature type="strand" evidence="22">
    <location>
        <begin position="1216"/>
        <end position="1220"/>
    </location>
</feature>
<feature type="helix" evidence="22">
    <location>
        <begin position="1221"/>
        <end position="1230"/>
    </location>
</feature>
<feature type="strand" evidence="22">
    <location>
        <begin position="1232"/>
        <end position="1236"/>
    </location>
</feature>
<feature type="helix" evidence="22">
    <location>
        <begin position="1239"/>
        <end position="1241"/>
    </location>
</feature>
<feature type="strand" evidence="23">
    <location>
        <begin position="1242"/>
        <end position="1244"/>
    </location>
</feature>
<feature type="helix" evidence="22">
    <location>
        <begin position="1246"/>
        <end position="1248"/>
    </location>
</feature>
<feature type="strand" evidence="22">
    <location>
        <begin position="1252"/>
        <end position="1265"/>
    </location>
</feature>
<feature type="turn" evidence="22">
    <location>
        <begin position="1267"/>
        <end position="1270"/>
    </location>
</feature>
<feature type="strand" evidence="22">
    <location>
        <begin position="1273"/>
        <end position="1280"/>
    </location>
</feature>
<feature type="turn" evidence="23">
    <location>
        <begin position="1281"/>
        <end position="1283"/>
    </location>
</feature>
<feature type="strand" evidence="22">
    <location>
        <begin position="1285"/>
        <end position="1289"/>
    </location>
</feature>
<feature type="strand" evidence="22">
    <location>
        <begin position="1300"/>
        <end position="1308"/>
    </location>
</feature>
<feature type="helix" evidence="22">
    <location>
        <begin position="1326"/>
        <end position="1334"/>
    </location>
</feature>
<feature type="strand" evidence="22">
    <location>
        <begin position="1336"/>
        <end position="1342"/>
    </location>
</feature>
<feature type="strand" evidence="22">
    <location>
        <begin position="1346"/>
        <end position="1361"/>
    </location>
</feature>
<protein>
    <recommendedName>
        <fullName>Laminin subunit alpha-2</fullName>
    </recommendedName>
    <alternativeName>
        <fullName>Laminin M chain</fullName>
    </alternativeName>
    <alternativeName>
        <fullName>Laminin-12 subunit alpha</fullName>
    </alternativeName>
    <alternativeName>
        <fullName>Laminin-2 subunit alpha</fullName>
    </alternativeName>
    <alternativeName>
        <fullName>Laminin-4 subunit alpha</fullName>
    </alternativeName>
    <alternativeName>
        <fullName>Merosin heavy chain</fullName>
    </alternativeName>
</protein>
<comment type="function">
    <text>Binding to cells via a high affinity receptor, laminin is thought to mediate the attachment, migration and organization of cells into tissues during embryonic development by interacting with other extracellular matrix components.</text>
</comment>
<comment type="subunit">
    <text>Laminin is a complex glycoprotein, consisting of three different polypeptide chains (alpha, beta, gamma), which are bound to each other by disulfide bonds into a cross-shaped molecule comprising one long and three short arms with globules at each end. Alpha-2 is a subunit of laminin-2 (laminin-211 or merosin), laminin-4 (laminin-221 or S-merosin) and laminin-12 (laminin-213). Interacts with FBLN1, FBLN2 and NID2.</text>
</comment>
<comment type="subcellular location">
    <subcellularLocation>
        <location>Secreted</location>
        <location>Extracellular space</location>
        <location>Extracellular matrix</location>
        <location>Basement membrane</location>
    </subcellularLocation>
    <text>Major component.</text>
</comment>
<comment type="tissue specificity">
    <text>Placenta, striated muscle, peripheral nerve, cardiac muscle, pancreas, lung, spleen, kidney, adrenal gland, skin, testis, meninges, choroid plexus, and some other regions of the brain; not in liver, thymus and bone.</text>
</comment>
<comment type="domain">
    <text>The alpha-helical domains I and II are thought to interact with other laminin chains to form a coiled coil structure.</text>
</comment>
<comment type="domain">
    <text>Domains VI, IV and G are globular.</text>
</comment>
<comment type="disease" evidence="8 9 15 17">
    <disease id="DI-01969">
        <name>Merosin-deficient congenital muscular dystrophy 1A</name>
        <acronym>MDC1A</acronym>
        <description>Characterized by difficulty walking, hypotonia, proximal weakness, hyporeflexia, and white matter hypodensity on MRI.</description>
        <dbReference type="MIM" id="607855"/>
    </disease>
    <text>The disease is caused by variants affecting the gene represented in this entry.</text>
</comment>
<comment type="disease" evidence="14 16">
    <disease id="DI-05343">
        <name>Muscular dystrophy, limb-girdle, autosomal recessive 23</name>
        <acronym>LGMDR23</acronym>
        <description>A form of autosomal recessive limb-girdle muscular dystrophy, a myopathy characterized by proximal and/or distal muscle weakness and atrophy. The age at onset is variable and can range from the first to the sixth decade, although later onset is less common. LGMDR23 is characterized by slowly progressive proximal muscle weakness primarily affecting the lower limbs, increased serum creatine kinase, dystrophic features, gait difficulties, and white matter abnormalities on brain imaging. Age at onset generally ranges from childhood to mid-adulthood. Some patients may have additional neurologic features, including executive deficits, seizures, and peripheral neuropathy.</description>
        <dbReference type="MIM" id="618138"/>
    </disease>
    <text>The disease is caused by variants affecting the gene represented in this entry.</text>
</comment>
<comment type="sequence caution" evidence="21">
    <conflict type="frameshift">
        <sequence resource="EMBL-CDS" id="AAA63215"/>
    </conflict>
</comment>
<comment type="sequence caution" evidence="21">
    <conflict type="erroneous gene model prediction">
        <sequence resource="EMBL-CDS" id="AAB18388"/>
    </conflict>
</comment>
<comment type="sequence caution" evidence="21">
    <conflict type="frameshift">
        <sequence resource="EMBL-CDS" id="CAA81394"/>
    </conflict>
</comment>
<proteinExistence type="evidence at protein level"/>